<reference key="1">
    <citation type="journal article" date="1998" name="Proc. Natl. Acad. Sci. U.S.A.">
        <title>Architectural DNA binding by a high-mobility-group/kinesin-like subunit in mammalian SWI/SNF-related complexes.</title>
        <authorList>
            <person name="Wang W."/>
            <person name="Chi T."/>
            <person name="Xue Y."/>
            <person name="Zhou S."/>
            <person name="Kuo A."/>
            <person name="Crabtree G.R."/>
        </authorList>
    </citation>
    <scope>NUCLEOTIDE SEQUENCE [GENOMIC DNA]</scope>
    <scope>ALTERNATIVE SPLICING (ISOFORM 1)</scope>
</reference>
<reference key="2">
    <citation type="submission" date="2007-12" db="EMBL/GenBank/DDBJ databases">
        <title>New players in remodeling neurogenesis: BAF57 neuron-specific isoforms influence transcription of NRSE-containing genes in a promoter-specific manner.</title>
        <authorList>
            <person name="Kazantseva A."/>
            <person name="Kazantseva J."/>
            <person name="Sadam H."/>
            <person name="Pruunsild P."/>
            <person name="Timmusk T."/>
            <person name="Neuman T."/>
            <person name="Palm K."/>
        </authorList>
    </citation>
    <scope>NUCLEOTIDE SEQUENCE [MRNA] (ISOFORMS 2; 4; 5 AND 6)</scope>
    <scope>ALTERNATIVE SPLICING</scope>
</reference>
<reference key="3">
    <citation type="submission" date="2003-05" db="EMBL/GenBank/DDBJ databases">
        <title>Cloning of human full-length CDSs in BD Creator(TM) system donor vector.</title>
        <authorList>
            <person name="Kalnine N."/>
            <person name="Chen X."/>
            <person name="Rolfs A."/>
            <person name="Halleck A."/>
            <person name="Hines L."/>
            <person name="Eisenstein S."/>
            <person name="Koundinya M."/>
            <person name="Raphael J."/>
            <person name="Moreira D."/>
            <person name="Kelley T."/>
            <person name="LaBaer J."/>
            <person name="Lin Y."/>
            <person name="Phelan M."/>
            <person name="Farmer A."/>
        </authorList>
    </citation>
    <scope>NUCLEOTIDE SEQUENCE [LARGE SCALE MRNA] (ISOFORM 1)</scope>
</reference>
<reference key="4">
    <citation type="journal article" date="2004" name="Nat. Genet.">
        <title>Complete sequencing and characterization of 21,243 full-length human cDNAs.</title>
        <authorList>
            <person name="Ota T."/>
            <person name="Suzuki Y."/>
            <person name="Nishikawa T."/>
            <person name="Otsuki T."/>
            <person name="Sugiyama T."/>
            <person name="Irie R."/>
            <person name="Wakamatsu A."/>
            <person name="Hayashi K."/>
            <person name="Sato H."/>
            <person name="Nagai K."/>
            <person name="Kimura K."/>
            <person name="Makita H."/>
            <person name="Sekine M."/>
            <person name="Obayashi M."/>
            <person name="Nishi T."/>
            <person name="Shibahara T."/>
            <person name="Tanaka T."/>
            <person name="Ishii S."/>
            <person name="Yamamoto J."/>
            <person name="Saito K."/>
            <person name="Kawai Y."/>
            <person name="Isono Y."/>
            <person name="Nakamura Y."/>
            <person name="Nagahari K."/>
            <person name="Murakami K."/>
            <person name="Yasuda T."/>
            <person name="Iwayanagi T."/>
            <person name="Wagatsuma M."/>
            <person name="Shiratori A."/>
            <person name="Sudo H."/>
            <person name="Hosoiri T."/>
            <person name="Kaku Y."/>
            <person name="Kodaira H."/>
            <person name="Kondo H."/>
            <person name="Sugawara M."/>
            <person name="Takahashi M."/>
            <person name="Kanda K."/>
            <person name="Yokoi T."/>
            <person name="Furuya T."/>
            <person name="Kikkawa E."/>
            <person name="Omura Y."/>
            <person name="Abe K."/>
            <person name="Kamihara K."/>
            <person name="Katsuta N."/>
            <person name="Sato K."/>
            <person name="Tanikawa M."/>
            <person name="Yamazaki M."/>
            <person name="Ninomiya K."/>
            <person name="Ishibashi T."/>
            <person name="Yamashita H."/>
            <person name="Murakawa K."/>
            <person name="Fujimori K."/>
            <person name="Tanai H."/>
            <person name="Kimata M."/>
            <person name="Watanabe M."/>
            <person name="Hiraoka S."/>
            <person name="Chiba Y."/>
            <person name="Ishida S."/>
            <person name="Ono Y."/>
            <person name="Takiguchi S."/>
            <person name="Watanabe S."/>
            <person name="Yosida M."/>
            <person name="Hotuta T."/>
            <person name="Kusano J."/>
            <person name="Kanehori K."/>
            <person name="Takahashi-Fujii A."/>
            <person name="Hara H."/>
            <person name="Tanase T.-O."/>
            <person name="Nomura Y."/>
            <person name="Togiya S."/>
            <person name="Komai F."/>
            <person name="Hara R."/>
            <person name="Takeuchi K."/>
            <person name="Arita M."/>
            <person name="Imose N."/>
            <person name="Musashino K."/>
            <person name="Yuuki H."/>
            <person name="Oshima A."/>
            <person name="Sasaki N."/>
            <person name="Aotsuka S."/>
            <person name="Yoshikawa Y."/>
            <person name="Matsunawa H."/>
            <person name="Ichihara T."/>
            <person name="Shiohata N."/>
            <person name="Sano S."/>
            <person name="Moriya S."/>
            <person name="Momiyama H."/>
            <person name="Satoh N."/>
            <person name="Takami S."/>
            <person name="Terashima Y."/>
            <person name="Suzuki O."/>
            <person name="Nakagawa S."/>
            <person name="Senoh A."/>
            <person name="Mizoguchi H."/>
            <person name="Goto Y."/>
            <person name="Shimizu F."/>
            <person name="Wakebe H."/>
            <person name="Hishigaki H."/>
            <person name="Watanabe T."/>
            <person name="Sugiyama A."/>
            <person name="Takemoto M."/>
            <person name="Kawakami B."/>
            <person name="Yamazaki M."/>
            <person name="Watanabe K."/>
            <person name="Kumagai A."/>
            <person name="Itakura S."/>
            <person name="Fukuzumi Y."/>
            <person name="Fujimori Y."/>
            <person name="Komiyama M."/>
            <person name="Tashiro H."/>
            <person name="Tanigami A."/>
            <person name="Fujiwara T."/>
            <person name="Ono T."/>
            <person name="Yamada K."/>
            <person name="Fujii Y."/>
            <person name="Ozaki K."/>
            <person name="Hirao M."/>
            <person name="Ohmori Y."/>
            <person name="Kawabata A."/>
            <person name="Hikiji T."/>
            <person name="Kobatake N."/>
            <person name="Inagaki H."/>
            <person name="Ikema Y."/>
            <person name="Okamoto S."/>
            <person name="Okitani R."/>
            <person name="Kawakami T."/>
            <person name="Noguchi S."/>
            <person name="Itoh T."/>
            <person name="Shigeta K."/>
            <person name="Senba T."/>
            <person name="Matsumura K."/>
            <person name="Nakajima Y."/>
            <person name="Mizuno T."/>
            <person name="Morinaga M."/>
            <person name="Sasaki M."/>
            <person name="Togashi T."/>
            <person name="Oyama M."/>
            <person name="Hata H."/>
            <person name="Watanabe M."/>
            <person name="Komatsu T."/>
            <person name="Mizushima-Sugano J."/>
            <person name="Satoh T."/>
            <person name="Shirai Y."/>
            <person name="Takahashi Y."/>
            <person name="Nakagawa K."/>
            <person name="Okumura K."/>
            <person name="Nagase T."/>
            <person name="Nomura N."/>
            <person name="Kikuchi H."/>
            <person name="Masuho Y."/>
            <person name="Yamashita R."/>
            <person name="Nakai K."/>
            <person name="Yada T."/>
            <person name="Nakamura Y."/>
            <person name="Ohara O."/>
            <person name="Isogai T."/>
            <person name="Sugano S."/>
        </authorList>
    </citation>
    <scope>NUCLEOTIDE SEQUENCE [LARGE SCALE MRNA] (ISOFORMS 1 AND 3)</scope>
    <source>
        <tissue>Amygdala</tissue>
        <tissue>Hippocampus</tissue>
    </source>
</reference>
<reference key="5">
    <citation type="journal article" date="2006" name="Nature">
        <title>DNA sequence of human chromosome 17 and analysis of rearrangement in the human lineage.</title>
        <authorList>
            <person name="Zody M.C."/>
            <person name="Garber M."/>
            <person name="Adams D.J."/>
            <person name="Sharpe T."/>
            <person name="Harrow J."/>
            <person name="Lupski J.R."/>
            <person name="Nicholson C."/>
            <person name="Searle S.M."/>
            <person name="Wilming L."/>
            <person name="Young S.K."/>
            <person name="Abouelleil A."/>
            <person name="Allen N.R."/>
            <person name="Bi W."/>
            <person name="Bloom T."/>
            <person name="Borowsky M.L."/>
            <person name="Bugalter B.E."/>
            <person name="Butler J."/>
            <person name="Chang J.L."/>
            <person name="Chen C.-K."/>
            <person name="Cook A."/>
            <person name="Corum B."/>
            <person name="Cuomo C.A."/>
            <person name="de Jong P.J."/>
            <person name="DeCaprio D."/>
            <person name="Dewar K."/>
            <person name="FitzGerald M."/>
            <person name="Gilbert J."/>
            <person name="Gibson R."/>
            <person name="Gnerre S."/>
            <person name="Goldstein S."/>
            <person name="Grafham D.V."/>
            <person name="Grocock R."/>
            <person name="Hafez N."/>
            <person name="Hagopian D.S."/>
            <person name="Hart E."/>
            <person name="Norman C.H."/>
            <person name="Humphray S."/>
            <person name="Jaffe D.B."/>
            <person name="Jones M."/>
            <person name="Kamal M."/>
            <person name="Khodiyar V.K."/>
            <person name="LaButti K."/>
            <person name="Laird G."/>
            <person name="Lehoczky J."/>
            <person name="Liu X."/>
            <person name="Lokyitsang T."/>
            <person name="Loveland J."/>
            <person name="Lui A."/>
            <person name="Macdonald P."/>
            <person name="Major J.E."/>
            <person name="Matthews L."/>
            <person name="Mauceli E."/>
            <person name="McCarroll S.A."/>
            <person name="Mihalev A.H."/>
            <person name="Mudge J."/>
            <person name="Nguyen C."/>
            <person name="Nicol R."/>
            <person name="O'Leary S.B."/>
            <person name="Osoegawa K."/>
            <person name="Schwartz D.C."/>
            <person name="Shaw-Smith C."/>
            <person name="Stankiewicz P."/>
            <person name="Steward C."/>
            <person name="Swarbreck D."/>
            <person name="Venkataraman V."/>
            <person name="Whittaker C.A."/>
            <person name="Yang X."/>
            <person name="Zimmer A.R."/>
            <person name="Bradley A."/>
            <person name="Hubbard T."/>
            <person name="Birren B.W."/>
            <person name="Rogers J."/>
            <person name="Lander E.S."/>
            <person name="Nusbaum C."/>
        </authorList>
    </citation>
    <scope>NUCLEOTIDE SEQUENCE [LARGE SCALE GENOMIC DNA]</scope>
</reference>
<reference key="6">
    <citation type="submission" date="2005-07" db="EMBL/GenBank/DDBJ databases">
        <authorList>
            <person name="Mural R.J."/>
            <person name="Istrail S."/>
            <person name="Sutton G.G."/>
            <person name="Florea L."/>
            <person name="Halpern A.L."/>
            <person name="Mobarry C.M."/>
            <person name="Lippert R."/>
            <person name="Walenz B."/>
            <person name="Shatkay H."/>
            <person name="Dew I."/>
            <person name="Miller J.R."/>
            <person name="Flanigan M.J."/>
            <person name="Edwards N.J."/>
            <person name="Bolanos R."/>
            <person name="Fasulo D."/>
            <person name="Halldorsson B.V."/>
            <person name="Hannenhalli S."/>
            <person name="Turner R."/>
            <person name="Yooseph S."/>
            <person name="Lu F."/>
            <person name="Nusskern D.R."/>
            <person name="Shue B.C."/>
            <person name="Zheng X.H."/>
            <person name="Zhong F."/>
            <person name="Delcher A.L."/>
            <person name="Huson D.H."/>
            <person name="Kravitz S.A."/>
            <person name="Mouchard L."/>
            <person name="Reinert K."/>
            <person name="Remington K.A."/>
            <person name="Clark A.G."/>
            <person name="Waterman M.S."/>
            <person name="Eichler E.E."/>
            <person name="Adams M.D."/>
            <person name="Hunkapiller M.W."/>
            <person name="Myers E.W."/>
            <person name="Venter J.C."/>
        </authorList>
    </citation>
    <scope>NUCLEOTIDE SEQUENCE [LARGE SCALE GENOMIC DNA]</scope>
</reference>
<reference key="7">
    <citation type="journal article" date="2004" name="Genome Res.">
        <title>The status, quality, and expansion of the NIH full-length cDNA project: the Mammalian Gene Collection (MGC).</title>
        <authorList>
            <consortium name="The MGC Project Team"/>
        </authorList>
    </citation>
    <scope>NUCLEOTIDE SEQUENCE [LARGE SCALE MRNA] (ISOFORM 1)</scope>
    <source>
        <tissue>Brain</tissue>
        <tissue>Testis</tissue>
    </source>
</reference>
<reference key="8">
    <citation type="journal article" date="2002" name="J. Biol. Chem.">
        <title>REST repression of neuronal genes requires components of the hSWI.SNF complex.</title>
        <authorList>
            <person name="Battaglioli E."/>
            <person name="Andres M.E."/>
            <person name="Rose D.W."/>
            <person name="Chenoweth J.G."/>
            <person name="Rosenfeld M.G."/>
            <person name="Anderson M.E."/>
            <person name="Mandel G."/>
        </authorList>
    </citation>
    <scope>ALTERNATIVE SPLICING (ISOFORMS 1 AND 2)</scope>
    <scope>SUBCELLULAR LOCATION</scope>
    <scope>INTERACTION WITH RCOR1</scope>
</reference>
<reference key="9">
    <citation type="journal article" date="2002" name="Nature">
        <title>Reciprocal regulation of CD4/CD8 expression by SWI/SNF-like BAF complexes.</title>
        <authorList>
            <person name="Chi T.H."/>
            <person name="Wan M."/>
            <person name="Zhao K."/>
            <person name="Taniuchi I."/>
            <person name="Chen L."/>
            <person name="Littman D.R."/>
            <person name="Crabtree G.R."/>
        </authorList>
    </citation>
    <scope>CHARACTERIZATION</scope>
</reference>
<reference key="10">
    <citation type="journal article" date="2002" name="EMBO J.">
        <title>Targeting of SWI/SNF chromatin remodelling complexes to estrogen-responsive genes.</title>
        <authorList>
            <person name="Belandia B."/>
            <person name="Orford R.L."/>
            <person name="Hurst H.C."/>
            <person name="Parker M.G."/>
        </authorList>
    </citation>
    <scope>CHARACTERIZATION</scope>
</reference>
<reference key="11">
    <citation type="journal article" date="2009" name="Sci. Signal.">
        <title>Quantitative phosphoproteomic analysis of T cell receptor signaling reveals system-wide modulation of protein-protein interactions.</title>
        <authorList>
            <person name="Mayya V."/>
            <person name="Lundgren D.H."/>
            <person name="Hwang S.-I."/>
            <person name="Rezaul K."/>
            <person name="Wu L."/>
            <person name="Eng J.K."/>
            <person name="Rodionov V."/>
            <person name="Han D.K."/>
        </authorList>
    </citation>
    <scope>PHOSPHORYLATION [LARGE SCALE ANALYSIS] AT SER-265</scope>
    <scope>IDENTIFICATION BY MASS SPECTROMETRY [LARGE SCALE ANALYSIS]</scope>
    <source>
        <tissue>Leukemic T-cell</tissue>
    </source>
</reference>
<reference key="12">
    <citation type="journal article" date="2010" name="Sci. Signal.">
        <title>Quantitative phosphoproteomics reveals widespread full phosphorylation site occupancy during mitosis.</title>
        <authorList>
            <person name="Olsen J.V."/>
            <person name="Vermeulen M."/>
            <person name="Santamaria A."/>
            <person name="Kumar C."/>
            <person name="Miller M.L."/>
            <person name="Jensen L.J."/>
            <person name="Gnad F."/>
            <person name="Cox J."/>
            <person name="Jensen T.S."/>
            <person name="Nigg E.A."/>
            <person name="Brunak S."/>
            <person name="Mann M."/>
        </authorList>
    </citation>
    <scope>IDENTIFICATION BY MASS SPECTROMETRY [LARGE SCALE ANALYSIS]</scope>
    <source>
        <tissue>Cervix carcinoma</tissue>
    </source>
</reference>
<reference key="13">
    <citation type="journal article" date="2011" name="BMC Syst. Biol.">
        <title>Initial characterization of the human central proteome.</title>
        <authorList>
            <person name="Burkard T.R."/>
            <person name="Planyavsky M."/>
            <person name="Kaupe I."/>
            <person name="Breitwieser F.P."/>
            <person name="Buerckstuemmer T."/>
            <person name="Bennett K.L."/>
            <person name="Superti-Furga G."/>
            <person name="Colinge J."/>
        </authorList>
    </citation>
    <scope>IDENTIFICATION BY MASS SPECTROMETRY [LARGE SCALE ANALYSIS]</scope>
</reference>
<reference key="14">
    <citation type="journal article" date="2013" name="J. Proteome Res.">
        <title>Toward a comprehensive characterization of a human cancer cell phosphoproteome.</title>
        <authorList>
            <person name="Zhou H."/>
            <person name="Di Palma S."/>
            <person name="Preisinger C."/>
            <person name="Peng M."/>
            <person name="Polat A.N."/>
            <person name="Heck A.J."/>
            <person name="Mohammed S."/>
        </authorList>
    </citation>
    <scope>PHOSPHORYLATION [LARGE SCALE ANALYSIS] AT SER-265</scope>
    <scope>IDENTIFICATION BY MASS SPECTROMETRY [LARGE SCALE ANALYSIS]</scope>
    <source>
        <tissue>Erythroleukemia</tissue>
    </source>
</reference>
<reference key="15">
    <citation type="journal article" date="2014" name="Mol. Cell. Proteomics">
        <title>Immunoaffinity enrichment and mass spectrometry analysis of protein methylation.</title>
        <authorList>
            <person name="Guo A."/>
            <person name="Gu H."/>
            <person name="Zhou J."/>
            <person name="Mulhern D."/>
            <person name="Wang Y."/>
            <person name="Lee K.A."/>
            <person name="Yang V."/>
            <person name="Aguiar M."/>
            <person name="Kornhauser J."/>
            <person name="Jia X."/>
            <person name="Ren J."/>
            <person name="Beausoleil S.A."/>
            <person name="Silva J.C."/>
            <person name="Vemulapalli V."/>
            <person name="Bedford M.T."/>
            <person name="Comb M.J."/>
        </authorList>
    </citation>
    <scope>METHYLATION [LARGE SCALE ANALYSIS] AT ARG-4 AND ARG-40</scope>
    <scope>IDENTIFICATION BY MASS SPECTROMETRY [LARGE SCALE ANALYSIS]</scope>
    <source>
        <tissue>Colon carcinoma</tissue>
    </source>
</reference>
<reference key="16">
    <citation type="journal article" date="2014" name="Nat. Struct. Mol. Biol.">
        <title>Uncovering global SUMOylation signaling networks in a site-specific manner.</title>
        <authorList>
            <person name="Hendriks I.A."/>
            <person name="D'Souza R.C."/>
            <person name="Yang B."/>
            <person name="Verlaan-de Vries M."/>
            <person name="Mann M."/>
            <person name="Vertegaal A.C."/>
        </authorList>
    </citation>
    <scope>SUMOYLATION [LARGE SCALE ANALYSIS] AT LYS-92</scope>
    <scope>IDENTIFICATION BY MASS SPECTROMETRY [LARGE SCALE ANALYSIS]</scope>
</reference>
<reference key="17">
    <citation type="journal article" date="2014" name="Proc. Natl. Acad. Sci. U.S.A.">
        <title>Mapping of SUMO sites and analysis of SUMOylation changes induced by external stimuli.</title>
        <authorList>
            <person name="Impens F."/>
            <person name="Radoshevich L."/>
            <person name="Cossart P."/>
            <person name="Ribet D."/>
        </authorList>
    </citation>
    <scope>SUMOYLATION [LARGE SCALE ANALYSIS] AT LYS-92</scope>
    <scope>IDENTIFICATION BY MASS SPECTROMETRY [LARGE SCALE ANALYSIS]</scope>
</reference>
<reference key="18">
    <citation type="journal article" date="2015" name="Mol. Cell. Proteomics">
        <title>System-wide analysis of SUMOylation dynamics in response to replication stress reveals novel small ubiquitin-like modified target proteins and acceptor lysines relevant for genome stability.</title>
        <authorList>
            <person name="Xiao Z."/>
            <person name="Chang J.G."/>
            <person name="Hendriks I.A."/>
            <person name="Sigurdsson J.O."/>
            <person name="Olsen J.V."/>
            <person name="Vertegaal A.C."/>
        </authorList>
    </citation>
    <scope>SUMOYLATION [LARGE SCALE ANALYSIS] AT LYS-92 AND LYS-146</scope>
    <scope>IDENTIFICATION BY MASS SPECTROMETRY [LARGE SCALE ANALYSIS]</scope>
</reference>
<reference key="19">
    <citation type="journal article" date="2017" name="Nat. Struct. Mol. Biol.">
        <title>Site-specific mapping of the human SUMO proteome reveals co-modification with phosphorylation.</title>
        <authorList>
            <person name="Hendriks I.A."/>
            <person name="Lyon D."/>
            <person name="Young C."/>
            <person name="Jensen L.J."/>
            <person name="Vertegaal A.C."/>
            <person name="Nielsen M.L."/>
        </authorList>
    </citation>
    <scope>SUMOYLATION [LARGE SCALE ANALYSIS] AT LYS-3; LYS-92; LYS-131; LYS-146; LYS-166 AND LYS-277</scope>
    <scope>IDENTIFICATION BY MASS SPECTROMETRY [LARGE SCALE ANALYSIS]</scope>
</reference>
<reference key="20">
    <citation type="journal article" date="2003" name="Curr. Opin. Genet. Dev.">
        <title>Recent advances in understanding chromatin remodeling by SWI/SNF complexes.</title>
        <authorList>
            <person name="Martens J.A."/>
            <person name="Winston F."/>
        </authorList>
    </citation>
    <scope>SWI/SNF CHROMATIN REMODELING COMPLEXES</scope>
</reference>
<reference key="21">
    <citation type="journal article" date="2003" name="Mol. Cell. Biol.">
        <title>BAF60a mediates critical interactions between nuclear receptors and the BRG1 chromatin-remodeling complex for transactivation.</title>
        <authorList>
            <person name="Hsiao P.W."/>
            <person name="Fryer C.J."/>
            <person name="Trotter K.W."/>
            <person name="Wang W."/>
            <person name="Archer T.K."/>
        </authorList>
    </citation>
    <scope>INTERACTION WITH NR3C1</scope>
</reference>
<reference key="22">
    <citation type="journal article" date="2005" name="Mol. Endocrinol.">
        <title>hZimp7, a novel PIAS-like protein, enhances androgen receptor-mediated transcription and interacts with SWI/SNF-like BAF complexes.</title>
        <authorList>
            <person name="Huang C.-Y."/>
            <person name="Beliakoff J."/>
            <person name="Li X."/>
            <person name="Lee J."/>
            <person name="Li X."/>
            <person name="Sharma M."/>
            <person name="Lim B."/>
            <person name="Sun Z."/>
        </authorList>
    </citation>
    <scope>INTERACTION WITH ZMIM2</scope>
</reference>
<reference key="23">
    <citation type="journal article" date="2008" name="Genes Dev.">
        <title>Regulation of muscle development by DPF3, a novel histone acetylation and methylation reader of the BAF chromatin remodeling complex.</title>
        <authorList>
            <person name="Lange M."/>
            <person name="Kaynak B."/>
            <person name="Forster U.B."/>
            <person name="Toenjes M."/>
            <person name="Fischer J.J."/>
            <person name="Grimm C."/>
            <person name="Schlesinger J."/>
            <person name="Just S."/>
            <person name="Dunkel I."/>
            <person name="Krueger T."/>
            <person name="Mebus S."/>
            <person name="Lehrach H."/>
            <person name="Lurz R."/>
            <person name="Gobom J."/>
            <person name="Rottbauer W."/>
            <person name="Abdelilah-Seyfried S."/>
            <person name="Sperling S."/>
        </authorList>
    </citation>
    <scope>IDENTIFICATION IN THE BAF COMPLEX</scope>
    <scope>IDENTIFICATION BY MASS SPECTROMETRY</scope>
</reference>
<reference key="24">
    <citation type="journal article" date="2010" name="J. Biol. Chem.">
        <title>Ubiquitin-dependent and ubiquitin-independent control of subunit stoichiometry in the SWI/SNF complex.</title>
        <authorList>
            <person name="Keppler B.R."/>
            <person name="Archer T.K."/>
        </authorList>
    </citation>
    <scope>UBIQUITINATION</scope>
</reference>
<reference key="25">
    <citation type="journal article" date="2012" name="J. Biol. Chem.">
        <title>SWI/SNF chromatin-remodeling factors: multiscale analyses and diverse functions.</title>
        <authorList>
            <person name="Euskirchen G."/>
            <person name="Auerbach R.K."/>
            <person name="Snyder M."/>
        </authorList>
    </citation>
    <scope>REVIEW ON SWI/SNF CHROMATIN REMODELING COMPLEXES</scope>
</reference>
<reference key="26">
    <citation type="journal article" date="2015" name="Sci. Adv.">
        <title>Mammalian SWI/SNF chromatin remodeling complexes and cancer: Mechanistic insights gained from human genomics.</title>
        <authorList>
            <person name="Kadoch C."/>
            <person name="Crabtree G.R."/>
        </authorList>
    </citation>
    <scope>REVIEW ON SWI/SNF CHROMATIN REMODELING COMPLEXES</scope>
</reference>
<reference key="27">
    <citation type="journal article" date="2012" name="Nat. Genet.">
        <title>Mutations affecting components of the SWI/SNF complex cause Coffin-Siris syndrome.</title>
        <authorList>
            <person name="Tsurusaki Y."/>
            <person name="Okamoto N."/>
            <person name="Ohashi H."/>
            <person name="Kosho T."/>
            <person name="Imai Y."/>
            <person name="Hibi-Ko Y."/>
            <person name="Kaname T."/>
            <person name="Naritomi K."/>
            <person name="Kawame H."/>
            <person name="Wakui K."/>
            <person name="Fukushima Y."/>
            <person name="Homma T."/>
            <person name="Kato M."/>
            <person name="Hiraki Y."/>
            <person name="Yamagata T."/>
            <person name="Yano S."/>
            <person name="Mizuno S."/>
            <person name="Sakazume S."/>
            <person name="Ishii T."/>
            <person name="Nagai T."/>
            <person name="Shiina M."/>
            <person name="Ogata K."/>
            <person name="Ohta T."/>
            <person name="Niikawa N."/>
            <person name="Miyatake S."/>
            <person name="Okada I."/>
            <person name="Mizuguchi T."/>
            <person name="Doi H."/>
            <person name="Saitsu H."/>
            <person name="Miyake N."/>
            <person name="Matsumoto N."/>
        </authorList>
    </citation>
    <scope>INVOLVEMENT IN CSS5</scope>
    <scope>VARIANT CSS5 CYS-73</scope>
</reference>
<reference key="28">
    <citation type="journal article" date="2013" name="Nat. Genet.">
        <title>Loss-of-function mutations in SMARCE1 cause an inherited disorder of multiple spinal meningiomas.</title>
        <authorList>
            <person name="Smith M.J."/>
            <person name="O'Sullivan J."/>
            <person name="Bhaskar S.S."/>
            <person name="Hadfield K.D."/>
            <person name="Poke G."/>
            <person name="Caird J."/>
            <person name="Sharif S."/>
            <person name="Eccles D."/>
            <person name="Fitzpatrick D."/>
            <person name="Rawluk D."/>
            <person name="du Plessis D."/>
            <person name="Newman W.G."/>
            <person name="Evans D.G."/>
        </authorList>
    </citation>
    <scope>INVOLVEMENT IN MNGMA</scope>
</reference>
<reference key="29">
    <citation type="journal article" date="2013" name="Hum. Mol. Genet.">
        <title>A comprehensive molecular study on Coffin-Siris and Nicolaides-Baraitser syndromes identifies a broad molecular and clinical spectrum converging on altered chromatin remodeling.</title>
        <authorList>
            <person name="Wieczorek D."/>
            <person name="Boegershausen N."/>
            <person name="Beleggia F."/>
            <person name="Steiner-Haldenstaett S."/>
            <person name="Pohl E."/>
            <person name="Li Y."/>
            <person name="Milz E."/>
            <person name="Martin M."/>
            <person name="Thiele H."/>
            <person name="Altmueller J."/>
            <person name="Alanay Y."/>
            <person name="Kayserili H."/>
            <person name="Klein-Hitpass L."/>
            <person name="Boehringer S."/>
            <person name="Wollstein A."/>
            <person name="Albrecht B."/>
            <person name="Boduroglu K."/>
            <person name="Caliebe A."/>
            <person name="Chrzanowska K."/>
            <person name="Cogulu O."/>
            <person name="Cristofoli F."/>
            <person name="Czeschik J.C."/>
            <person name="Devriendt K."/>
            <person name="Dotti M.T."/>
            <person name="Elcioglu N."/>
            <person name="Gener B."/>
            <person name="Goecke T.O."/>
            <person name="Krajewska-Walasek M."/>
            <person name="Guillen-Navarro E."/>
            <person name="Hayek J."/>
            <person name="Houge G."/>
            <person name="Kilic E."/>
            <person name="Simsek-Kiper P.O."/>
            <person name="Lopez-Gonzalez V."/>
            <person name="Kuechler A."/>
            <person name="Lyonnet S."/>
            <person name="Mari F."/>
            <person name="Marozza A."/>
            <person name="Mathieu Dramard M."/>
            <person name="Mikat B."/>
            <person name="Morin G."/>
            <person name="Morice-Picard F."/>
            <person name="Ozkinay F."/>
            <person name="Rauch A."/>
            <person name="Renieri A."/>
            <person name="Tinschert S."/>
            <person name="Utine G.E."/>
            <person name="Vilain C."/>
            <person name="Vivarelli R."/>
            <person name="Zweier C."/>
            <person name="Nuernberg P."/>
            <person name="Rahmann S."/>
            <person name="Vermeesch J."/>
            <person name="Luedecke H.J."/>
            <person name="Zeschnigk M."/>
            <person name="Wollnik B."/>
        </authorList>
    </citation>
    <scope>VARIANT CSS5 SER-73</scope>
</reference>
<reference key="30">
    <citation type="journal article" date="2015" name="Childs Nerv. Syst.">
        <title>Pediatric intracranial clear cell meningioma associated with a germline mutation of SMARCE1: a novel case.</title>
        <authorList>
            <person name="Raffalli-Ebezant H."/>
            <person name="Rutherford S.A."/>
            <person name="Stivaros S."/>
            <person name="Kelsey A."/>
            <person name="Smith M."/>
            <person name="Evans D.G."/>
            <person name="Kilday J.P."/>
        </authorList>
    </citation>
    <scope>VARIANT MNGMA 125-GLU--ALA-132 DELINS GLY-LEU-HIS-ARG-PHE-ILE-VAL-LEU</scope>
</reference>
<keyword id="KW-0002">3D-structure</keyword>
<keyword id="KW-0025">Alternative splicing</keyword>
<keyword id="KW-0156">Chromatin regulator</keyword>
<keyword id="KW-0175">Coiled coil</keyword>
<keyword id="KW-0225">Disease variant</keyword>
<keyword id="KW-0238">DNA-binding</keyword>
<keyword id="KW-0991">Intellectual disability</keyword>
<keyword id="KW-1017">Isopeptide bond</keyword>
<keyword id="KW-0488">Methylation</keyword>
<keyword id="KW-0524">Neurogenesis</keyword>
<keyword id="KW-0539">Nucleus</keyword>
<keyword id="KW-0597">Phosphoprotein</keyword>
<keyword id="KW-1267">Proteomics identification</keyword>
<keyword id="KW-1185">Reference proteome</keyword>
<keyword id="KW-0832">Ubl conjugation</keyword>
<name>SMCE1_HUMAN</name>
<feature type="chain" id="PRO_0000048577" description="SWI/SNF-related matrix-associated actin-dependent regulator of chromatin subfamily E member 1">
    <location>
        <begin position="1"/>
        <end position="411"/>
    </location>
</feature>
<feature type="DNA-binding region" description="HMG box" evidence="4">
    <location>
        <begin position="66"/>
        <end position="134"/>
    </location>
</feature>
<feature type="region of interest" description="Disordered" evidence="5">
    <location>
        <begin position="1"/>
        <end position="23"/>
    </location>
</feature>
<feature type="region of interest" description="Disordered" evidence="5">
    <location>
        <begin position="42"/>
        <end position="70"/>
    </location>
</feature>
<feature type="region of interest" description="Disordered" evidence="5">
    <location>
        <begin position="153"/>
        <end position="175"/>
    </location>
</feature>
<feature type="region of interest" description="Disordered" evidence="5">
    <location>
        <begin position="296"/>
        <end position="411"/>
    </location>
</feature>
<feature type="coiled-coil region" evidence="3">
    <location>
        <begin position="220"/>
        <end position="319"/>
    </location>
</feature>
<feature type="compositionally biased region" description="Polar residues" evidence="5">
    <location>
        <begin position="46"/>
        <end position="57"/>
    </location>
</feature>
<feature type="compositionally biased region" description="Basic and acidic residues" evidence="5">
    <location>
        <begin position="153"/>
        <end position="168"/>
    </location>
</feature>
<feature type="compositionally biased region" description="Basic and acidic residues" evidence="5">
    <location>
        <begin position="296"/>
        <end position="312"/>
    </location>
</feature>
<feature type="compositionally biased region" description="Polar residues" evidence="5">
    <location>
        <begin position="353"/>
        <end position="363"/>
    </location>
</feature>
<feature type="compositionally biased region" description="Polar residues" evidence="5">
    <location>
        <begin position="383"/>
        <end position="395"/>
    </location>
</feature>
<feature type="modified residue" description="Omega-N-methylarginine" evidence="23">
    <location>
        <position position="4"/>
    </location>
</feature>
<feature type="modified residue" description="Omega-N-methylarginine" evidence="23">
    <location>
        <position position="40"/>
    </location>
</feature>
<feature type="modified residue" description="Phosphoserine" evidence="21 22">
    <location>
        <position position="265"/>
    </location>
</feature>
<feature type="cross-link" description="Glycyl lysine isopeptide (Lys-Gly) (interchain with G-Cter in SUMO2)" evidence="27">
    <location>
        <position position="3"/>
    </location>
</feature>
<feature type="cross-link" description="Glycyl lysine isopeptide (Lys-Gly) (interchain with G-Cter in SUMO1); alternate" evidence="24">
    <location>
        <position position="92"/>
    </location>
</feature>
<feature type="cross-link" description="Glycyl lysine isopeptide (Lys-Gly) (interchain with G-Cter in SUMO2); alternate" evidence="24 25 26 27">
    <location>
        <position position="92"/>
    </location>
</feature>
<feature type="cross-link" description="Glycyl lysine isopeptide (Lys-Gly) (interchain with G-Cter in SUMO2)" evidence="27">
    <location>
        <position position="131"/>
    </location>
</feature>
<feature type="cross-link" description="Glycyl lysine isopeptide (Lys-Gly) (interchain with G-Cter in SUMO2)" evidence="26 27">
    <location>
        <position position="146"/>
    </location>
</feature>
<feature type="cross-link" description="Glycyl lysine isopeptide (Lys-Gly) (interchain with G-Cter in SUMO2)" evidence="27">
    <location>
        <position position="166"/>
    </location>
</feature>
<feature type="cross-link" description="Glycyl lysine isopeptide (Lys-Gly) (interchain with G-Cter in SUMO2)" evidence="27">
    <location>
        <position position="277"/>
    </location>
</feature>
<feature type="splice variant" id="VSP_047604" description="In isoform 3 and isoform 6." evidence="16 19">
    <location>
        <begin position="1"/>
        <end position="70"/>
    </location>
</feature>
<feature type="splice variant" id="VSP_047825" description="In isoform 4 and isoform 5." evidence="19">
    <location>
        <begin position="17"/>
        <end position="51"/>
    </location>
</feature>
<feature type="splice variant" id="VSP_047826" description="In isoform 5 and isoform 6." evidence="19">
    <original>ETHLEETTESQQNGEEGTSTPEDKESGQEGVDSMAEEGTSDSNTGSESNSATVEEPPTDPIPEDEKKE</original>
    <variation>KNCQLCPRKTLTSRYTDFPD</variation>
    <location>
        <begin position="344"/>
        <end position="411"/>
    </location>
</feature>
<feature type="splice variant" id="VSP_011801" description="In isoform 2." evidence="19">
    <original>ETHLEETTESQQNGEEGTST</original>
    <variation>KNCQLCPRKTLTSRYTDFPD</variation>
    <location>
        <begin position="344"/>
        <end position="363"/>
    </location>
</feature>
<feature type="splice variant" id="VSP_011802" description="In isoform 2." evidence="19">
    <location>
        <begin position="364"/>
        <end position="411"/>
    </location>
</feature>
<feature type="sequence variant" id="VAR_068215" description="In CSS5; dbSNP:rs387906857." evidence="11">
    <original>Y</original>
    <variation>C</variation>
    <location>
        <position position="73"/>
    </location>
</feature>
<feature type="sequence variant" id="VAR_076932" description="In CSS5; dbSNP:rs387906857." evidence="13">
    <original>Y</original>
    <variation>S</variation>
    <location>
        <position position="73"/>
    </location>
</feature>
<feature type="sequence variant" id="VAR_071873" description="In MNGMA; uncertain significance." evidence="14">
    <original>EYNESMKA</original>
    <variation>GLHRFIVL</variation>
    <location>
        <begin position="125"/>
        <end position="132"/>
    </location>
</feature>
<feature type="sequence conflict" description="In Ref. 3; AAP35840 and 7; AAH07082/AAH11017." evidence="20" ref="3 7">
    <original>G</original>
    <variation>S</variation>
    <location>
        <position position="46"/>
    </location>
</feature>
<feature type="helix" evidence="29">
    <location>
        <begin position="72"/>
        <end position="87"/>
    </location>
</feature>
<feature type="helix" evidence="29">
    <location>
        <begin position="93"/>
        <end position="105"/>
    </location>
</feature>
<feature type="helix" evidence="29">
    <location>
        <begin position="109"/>
        <end position="127"/>
    </location>
</feature>
<feature type="helix" evidence="28">
    <location>
        <begin position="187"/>
        <end position="206"/>
    </location>
</feature>
<feature type="helix" evidence="28">
    <location>
        <begin position="221"/>
        <end position="275"/>
    </location>
</feature>
<comment type="function">
    <text evidence="1 15 17 18">Involved in transcriptional activation and repression of select genes by chromatin remodeling (alteration of DNA-nucleosome topology). Component of SWI/SNF chromatin remodeling complexes that carry out key enzymatic activities, changing chromatin structure by altering DNA-histone contacts within a nucleosome in an ATP-dependent manner. Belongs to the neural progenitors-specific chromatin remodeling complex (npBAF complex) and the neuron-specific chromatin remodeling complex (nBAF complex). During neural development a switch from a stem/progenitor to a postmitotic chromatin remodeling mechanism occurs as neurons exit the cell cycle and become committed to their adult state. The transition from proliferating neural stem/progenitor cells to postmitotic neurons requires a switch in subunit composition of the npBAF and nBAF complexes. As neural progenitors exit mitosis and differentiate into neurons, npBAF complexes which contain ACTL6A/BAF53A and PHF10/BAF45A, are exchanged for homologous alternative ACTL6B/BAF53B and DPF1/BAF45B or DPF3/BAF45C subunits in neuron-specific complexes (nBAF). The npBAF complex is essential for the self-renewal/proliferative capacity of the multipotent neural stem cells. The nBAF complex along with CREST plays a role regulating the activity of genes essential for dendrite growth (By similarity). Required for the coactivation of estrogen responsive promoters by SWI/SNF complexes and the SRC/p160 family of histone acetyltransferases (HATs). Also specifically interacts with the CoREST corepressor resulting in repression of neuronal specific gene promoters in non-neuronal cells.</text>
</comment>
<comment type="subunit">
    <text evidence="1 2 6 7 8 9 15 17 18">Component of the multiprotein chromatin-remodeling complexes SWI/SNF: SWI/SNF-A (BAF), SWI/SNF-B (PBAF) and related complexes. The canonical complex contains a catalytic subunit (either SMARCA4/BRG1/BAF190A or SMARCA2/BRM/BAF190B), and at least SMARCE1, ACTL6A/BAF53, SMARCC1/BAF155, SMARCC2/BAF170, and SMARCB1/SNF5/BAF47. Other subunits specific to each of the complexes may also be present permitting several possible combinations developmentally and tissue specific (PubMed:12672490, PubMed:22952240, PubMed:26601204). Component of the BAF complex, which includes at least actin (ACTB), ARID1A/BAF250A, ARID1B/BAF250B, SMARCA2/BRM/BAF190B, SMARCA4/BRG1/BAF190A, ACTL6A/BAF53, ACTL6B/BAF53B, SMARCE1/BAF57, SMARCC1/BAF155, SMARCC2/BAF170, SMARCB1/SNF5/INI1, and one or more SMARCD1/BAF60A, SMARCD2/BAF60B, or SMARCD3/BAF60C. In muscle cells, the BAF complex also contains DPF3 (PubMed:18765789). Component of neural progenitors-specific chromatin remodeling complex (npBAF complex) composed of at least, ARID1A/BAF250A or ARID1B/BAF250B, SMARCD1/BAF60A, SMARCD3/BAF60C, SMARCA2/BRM/BAF190B, SMARCA4/BRG1/BAF190A, SMARCB1/BAF47, SMARCC1/BAF155, SMARCE1/BAF57, SMARCC2/BAF170, PHF10/BAF45A, ACTL6A/BAF53A and actin. Component of neuron-specific chromatin remodeling complex (nBAF complex) composed of at least, ARID1A/BAF250A or ARID1B/BAF250B, SMARCD1/BAF60A, SMARCD3/BAF60C, SMARCA2/BRM/BAF190B, SMARCA4/BRG1/BAF190A, SMARCB1/BAF47, SMARCC1/BAF155, SMARCE1/BAF57, SMARCC2/BAF170, DPF1/BAF45B, DPF3/BAF45C, ACTL6B/BAF53B and actin. May be a component of the SWI/SNF-B (PBAF) chromatin remodeling complex, at least composed of SMARCA4/BRG1, SMARCB1/BAF47/SNF5, ACTL6A/BAF53A or ACTL6B/BAF53B, SMARCE1/BAF57, SMARCD1/BAF60A, SMARCD2/BAF60B, perhaps SMARCD3/BAF60C, SMARCC1/BAF155, SMARCC2/BAF170, PBRM1/BAF180, ARID2/BAF200 and actin (ACTB) (PubMed:22952240, PubMed:26601204). Interacts with BRDT (By similarity). Also binds to the SRC/p160 family of histone acetyltransferases (HATs) composed of NCOA1, NCOA2, and NCOA3. Interacts with RCOR1/CoREST, NR3C1 and ZMIM2/ZIMP7 (PubMed:12192000, PubMed:12917342, PubMed:16051670).</text>
</comment>
<comment type="interaction">
    <interactant intactId="EBI-455078">
        <id>Q969G3</id>
    </interactant>
    <interactant intactId="EBI-746752">
        <id>Q9Y2J4</id>
        <label>AMOTL2</label>
    </interactant>
    <organismsDiffer>false</organismsDiffer>
    <experiments>3</experiments>
</comment>
<comment type="interaction">
    <interactant intactId="EBI-455078">
        <id>Q969G3</id>
    </interactant>
    <interactant intactId="EBI-10187270">
        <id>Q9Y2J4-4</id>
        <label>AMOTL2</label>
    </interactant>
    <organismsDiffer>false</organismsDiffer>
    <experiments>3</experiments>
</comment>
<comment type="interaction">
    <interactant intactId="EBI-455078">
        <id>Q969G3</id>
    </interactant>
    <interactant intactId="EBI-637818">
        <id>Q68CP9</id>
        <label>ARID2</label>
    </interactant>
    <organismsDiffer>false</organismsDiffer>
    <experiments>7</experiments>
</comment>
<comment type="interaction">
    <interactant intactId="EBI-455078">
        <id>Q969G3</id>
    </interactant>
    <interactant intactId="EBI-714781">
        <id>Q9HCU9</id>
        <label>BRMS1</label>
    </interactant>
    <organismsDiffer>false</organismsDiffer>
    <experiments>3</experiments>
</comment>
<comment type="interaction">
    <interactant intactId="EBI-455078">
        <id>Q969G3</id>
    </interactant>
    <interactant intactId="EBI-10171416">
        <id>Q96JN2-2</id>
        <label>CCDC136</label>
    </interactant>
    <organismsDiffer>false</organismsDiffer>
    <experiments>3</experiments>
</comment>
<comment type="interaction">
    <interactant intactId="EBI-455078">
        <id>Q969G3</id>
    </interactant>
    <interactant intactId="EBI-2548868">
        <id>P0C7W6</id>
        <label>CCDC172</label>
    </interactant>
    <organismsDiffer>false</organismsDiffer>
    <experiments>4</experiments>
</comment>
<comment type="interaction">
    <interactant intactId="EBI-455078">
        <id>Q969G3</id>
    </interactant>
    <interactant intactId="EBI-17212717">
        <id>G5E9W6</id>
        <label>CCDC183</label>
    </interactant>
    <organismsDiffer>false</organismsDiffer>
    <experiments>3</experiments>
</comment>
<comment type="interaction">
    <interactant intactId="EBI-455078">
        <id>Q969G3</id>
    </interactant>
    <interactant intactId="EBI-10175300">
        <id>Q8TD31-3</id>
        <label>CCHCR1</label>
    </interactant>
    <organismsDiffer>false</organismsDiffer>
    <experiments>3</experiments>
</comment>
<comment type="interaction">
    <interactant intactId="EBI-455078">
        <id>Q969G3</id>
    </interactant>
    <interactant intactId="EBI-1181367">
        <id>Q01850</id>
        <label>CDR2</label>
    </interactant>
    <organismsDiffer>false</organismsDiffer>
    <experiments>6</experiments>
</comment>
<comment type="interaction">
    <interactant intactId="EBI-455078">
        <id>Q969G3</id>
    </interactant>
    <interactant intactId="EBI-743488">
        <id>Q96L14</id>
        <label>CEP170P1</label>
    </interactant>
    <organismsDiffer>false</organismsDiffer>
    <experiments>3</experiments>
</comment>
<comment type="interaction">
    <interactant intactId="EBI-455078">
        <id>Q969G3</id>
    </interactant>
    <interactant intactId="EBI-741977">
        <id>Q96MT8</id>
        <label>CEP63</label>
    </interactant>
    <organismsDiffer>false</organismsDiffer>
    <experiments>4</experiments>
</comment>
<comment type="interaction">
    <interactant intactId="EBI-455078">
        <id>Q969G3</id>
    </interactant>
    <interactant intactId="EBI-11522539">
        <id>Q96MT8-3</id>
        <label>CEP63</label>
    </interactant>
    <organismsDiffer>false</organismsDiffer>
    <experiments>3</experiments>
</comment>
<comment type="interaction">
    <interactant intactId="EBI-455078">
        <id>Q969G3</id>
    </interactant>
    <interactant intactId="EBI-739624">
        <id>Q8NHQ1</id>
        <label>CEP70</label>
    </interactant>
    <organismsDiffer>false</organismsDiffer>
    <experiments>6</experiments>
</comment>
<comment type="interaction">
    <interactant intactId="EBI-455078">
        <id>Q969G3</id>
    </interactant>
    <interactant intactId="EBI-3867333">
        <id>A8MQ03</id>
        <label>CYSRT1</label>
    </interactant>
    <organismsDiffer>false</organismsDiffer>
    <experiments>3</experiments>
</comment>
<comment type="interaction">
    <interactant intactId="EBI-455078">
        <id>Q969G3</id>
    </interactant>
    <interactant intactId="EBI-11988027">
        <id>Q9NRI5-2</id>
        <label>DISC1</label>
    </interactant>
    <organismsDiffer>false</organismsDiffer>
    <experiments>3</experiments>
</comment>
<comment type="interaction">
    <interactant intactId="EBI-455078">
        <id>Q969G3</id>
    </interactant>
    <interactant intactId="EBI-375576">
        <id>Q12929</id>
        <label>EPS8</label>
    </interactant>
    <organismsDiffer>false</organismsDiffer>
    <experiments>3</experiments>
</comment>
<comment type="interaction">
    <interactant intactId="EBI-455078">
        <id>Q969G3</id>
    </interactant>
    <interactant intactId="EBI-17869840">
        <id>Q96A65-2</id>
        <label>EXOC4</label>
    </interactant>
    <organismsDiffer>false</organismsDiffer>
    <experiments>3</experiments>
</comment>
<comment type="interaction">
    <interactant intactId="EBI-455078">
        <id>Q969G3</id>
    </interactant>
    <interactant intactId="EBI-720048">
        <id>Q9UPT5</id>
        <label>EXOC7</label>
    </interactant>
    <organismsDiffer>false</organismsDiffer>
    <experiments>5</experiments>
</comment>
<comment type="interaction">
    <interactant intactId="EBI-455078">
        <id>Q969G3</id>
    </interactant>
    <interactant intactId="EBI-19153639">
        <id>Q9NTX9</id>
        <label>FAM217B</label>
    </interactant>
    <organismsDiffer>false</organismsDiffer>
    <experiments>3</experiments>
</comment>
<comment type="interaction">
    <interactant intactId="EBI-455078">
        <id>Q969G3</id>
    </interactant>
    <interactant intactId="EBI-5661036">
        <id>A1L4K1</id>
        <label>FSD2</label>
    </interactant>
    <organismsDiffer>false</organismsDiffer>
    <experiments>3</experiments>
</comment>
<comment type="interaction">
    <interactant intactId="EBI-455078">
        <id>Q969G3</id>
    </interactant>
    <interactant intactId="EBI-618309">
        <id>Q08379</id>
        <label>GOLGA2</label>
    </interactant>
    <organismsDiffer>false</organismsDiffer>
    <experiments>6</experiments>
</comment>
<comment type="interaction">
    <interactant intactId="EBI-455078">
        <id>Q969G3</id>
    </interactant>
    <interactant intactId="EBI-5916454">
        <id>A6NEM1</id>
        <label>GOLGA6L9</label>
    </interactant>
    <organismsDiffer>false</organismsDiffer>
    <experiments>3</experiments>
</comment>
<comment type="interaction">
    <interactant intactId="EBI-455078">
        <id>Q969G3</id>
    </interactant>
    <interactant intactId="EBI-717919">
        <id>Q4V328</id>
        <label>GRIPAP1</label>
    </interactant>
    <organismsDiffer>false</organismsDiffer>
    <experiments>3</experiments>
</comment>
<comment type="interaction">
    <interactant intactId="EBI-455078">
        <id>Q969G3</id>
    </interactant>
    <interactant intactId="EBI-12066130">
        <id>Q96LB3-2</id>
        <label>IFT74</label>
    </interactant>
    <organismsDiffer>false</organismsDiffer>
    <experiments>3</experiments>
</comment>
<comment type="interaction">
    <interactant intactId="EBI-455078">
        <id>Q969G3</id>
    </interactant>
    <interactant intactId="EBI-347427">
        <id>Q13099</id>
        <label>IFT88</label>
    </interactant>
    <organismsDiffer>false</organismsDiffer>
    <experiments>3</experiments>
</comment>
<comment type="interaction">
    <interactant intactId="EBI-455078">
        <id>Q969G3</id>
    </interactant>
    <interactant intactId="EBI-488533">
        <id>Q8WYH8</id>
        <label>ING5</label>
    </interactant>
    <organismsDiffer>false</organismsDiffer>
    <experiments>3</experiments>
</comment>
<comment type="interaction">
    <interactant intactId="EBI-455078">
        <id>Q969G3</id>
    </interactant>
    <interactant intactId="EBI-752007">
        <id>Q96AA8</id>
        <label>JAKMIP2</label>
    </interactant>
    <organismsDiffer>false</organismsDiffer>
    <experiments>3</experiments>
</comment>
<comment type="interaction">
    <interactant intactId="EBI-455078">
        <id>Q969G3</id>
    </interactant>
    <interactant intactId="EBI-2125614">
        <id>Q9BVG8</id>
        <label>KIFC3</label>
    </interactant>
    <organismsDiffer>false</organismsDiffer>
    <experiments>4</experiments>
</comment>
<comment type="interaction">
    <interactant intactId="EBI-455078">
        <id>Q969G3</id>
    </interactant>
    <interactant intactId="EBI-702178">
        <id>P02533</id>
        <label>KRT14</label>
    </interactant>
    <organismsDiffer>false</organismsDiffer>
    <experiments>3</experiments>
</comment>
<comment type="interaction">
    <interactant intactId="EBI-455078">
        <id>Q969G3</id>
    </interactant>
    <interactant intactId="EBI-739566">
        <id>P19012</id>
        <label>KRT15</label>
    </interactant>
    <organismsDiffer>false</organismsDiffer>
    <experiments>3</experiments>
</comment>
<comment type="interaction">
    <interactant intactId="EBI-455078">
        <id>Q969G3</id>
    </interactant>
    <interactant intactId="EBI-356410">
        <id>P08779</id>
        <label>KRT16</label>
    </interactant>
    <organismsDiffer>false</organismsDiffer>
    <experiments>3</experiments>
</comment>
<comment type="interaction">
    <interactant intactId="EBI-455078">
        <id>Q969G3</id>
    </interactant>
    <interactant intactId="EBI-742756">
        <id>P08727</id>
        <label>KRT19</label>
    </interactant>
    <organismsDiffer>false</organismsDiffer>
    <experiments>3</experiments>
</comment>
<comment type="interaction">
    <interactant intactId="EBI-455078">
        <id>Q969G3</id>
    </interactant>
    <interactant intactId="EBI-3044087">
        <id>Q7Z3Y8</id>
        <label>KRT27</label>
    </interactant>
    <organismsDiffer>false</organismsDiffer>
    <experiments>3</experiments>
</comment>
<comment type="interaction">
    <interactant intactId="EBI-455078">
        <id>Q969G3</id>
    </interactant>
    <interactant intactId="EBI-948001">
        <id>Q15323</id>
        <label>KRT31</label>
    </interactant>
    <organismsDiffer>false</organismsDiffer>
    <experiments>6</experiments>
</comment>
<comment type="interaction">
    <interactant intactId="EBI-455078">
        <id>Q969G3</id>
    </interactant>
    <interactant intactId="EBI-1047093">
        <id>O76011</id>
        <label>KRT34</label>
    </interactant>
    <organismsDiffer>false</organismsDiffer>
    <experiments>3</experiments>
</comment>
<comment type="interaction">
    <interactant intactId="EBI-455078">
        <id>Q969G3</id>
    </interactant>
    <interactant intactId="EBI-1058674">
        <id>Q92764</id>
        <label>KRT35</label>
    </interactant>
    <organismsDiffer>false</organismsDiffer>
    <experiments>3</experiments>
</comment>
<comment type="interaction">
    <interactant intactId="EBI-455078">
        <id>Q969G3</id>
    </interactant>
    <interactant intactId="EBI-1045716">
        <id>O76014</id>
        <label>KRT37</label>
    </interactant>
    <organismsDiffer>false</organismsDiffer>
    <experiments>3</experiments>
</comment>
<comment type="interaction">
    <interactant intactId="EBI-455078">
        <id>Q969G3</id>
    </interactant>
    <interactant intactId="EBI-11958242">
        <id>Q6A163</id>
        <label>KRT39</label>
    </interactant>
    <organismsDiffer>false</organismsDiffer>
    <experiments>3</experiments>
</comment>
<comment type="interaction">
    <interactant intactId="EBI-455078">
        <id>Q969G3</id>
    </interactant>
    <interactant intactId="EBI-10171697">
        <id>Q6A162</id>
        <label>KRT40</label>
    </interactant>
    <organismsDiffer>false</organismsDiffer>
    <experiments>6</experiments>
</comment>
<comment type="interaction">
    <interactant intactId="EBI-455078">
        <id>Q969G3</id>
    </interactant>
    <interactant intactId="EBI-11959885">
        <id>Q07627</id>
        <label>KRTAP1-1</label>
    </interactant>
    <organismsDiffer>false</organismsDiffer>
    <experiments>3</experiments>
</comment>
<comment type="interaction">
    <interactant intactId="EBI-455078">
        <id>Q969G3</id>
    </interactant>
    <interactant intactId="EBI-10171774">
        <id>P60410</id>
        <label>KRTAP10-8</label>
    </interactant>
    <organismsDiffer>false</organismsDiffer>
    <experiments>3</experiments>
</comment>
<comment type="interaction">
    <interactant intactId="EBI-455078">
        <id>Q969G3</id>
    </interactant>
    <interactant intactId="EBI-10172052">
        <id>P60411</id>
        <label>KRTAP10-9</label>
    </interactant>
    <organismsDiffer>false</organismsDiffer>
    <experiments>3</experiments>
</comment>
<comment type="interaction">
    <interactant intactId="EBI-455078">
        <id>Q969G3</id>
    </interactant>
    <interactant intactId="EBI-22311199">
        <id>Q3LI67</id>
        <label>KRTAP6-3</label>
    </interactant>
    <organismsDiffer>false</organismsDiffer>
    <experiments>3</experiments>
</comment>
<comment type="interaction">
    <interactant intactId="EBI-455078">
        <id>Q969G3</id>
    </interactant>
    <interactant intactId="EBI-394607">
        <id>Q9NPJ6</id>
        <label>MED4</label>
    </interactant>
    <organismsDiffer>false</organismsDiffer>
    <experiments>3</experiments>
</comment>
<comment type="interaction">
    <interactant intactId="EBI-455078">
        <id>Q969G3</id>
    </interactant>
    <interactant intactId="EBI-748397">
        <id>P50222</id>
        <label>MEOX2</label>
    </interactant>
    <organismsDiffer>false</organismsDiffer>
    <experiments>3</experiments>
</comment>
<comment type="interaction">
    <interactant intactId="EBI-455078">
        <id>Q969G3</id>
    </interactant>
    <interactant intactId="EBI-16439278">
        <id>Q6FHY5</id>
        <label>MEOX2</label>
    </interactant>
    <organismsDiffer>false</organismsDiffer>
    <experiments>3</experiments>
</comment>
<comment type="interaction">
    <interactant intactId="EBI-455078">
        <id>Q969G3</id>
    </interactant>
    <interactant intactId="EBI-2548751">
        <id>Q8TD10</id>
        <label>MIPOL1</label>
    </interactant>
    <organismsDiffer>false</organismsDiffer>
    <experiments>6</experiments>
</comment>
<comment type="interaction">
    <interactant intactId="EBI-455078">
        <id>Q969G3</id>
    </interactant>
    <interactant intactId="EBI-748896">
        <id>Q96HT8</id>
        <label>MRFAP1L1</label>
    </interactant>
    <organismsDiffer>false</organismsDiffer>
    <experiments>3</experiments>
</comment>
<comment type="interaction">
    <interactant intactId="EBI-455078">
        <id>Q969G3</id>
    </interactant>
    <interactant intactId="EBI-742948">
        <id>Q5JR59</id>
        <label>MTUS2</label>
    </interactant>
    <organismsDiffer>false</organismsDiffer>
    <experiments>3</experiments>
</comment>
<comment type="interaction">
    <interactant intactId="EBI-455078">
        <id>Q969G3</id>
    </interactant>
    <interactant intactId="EBI-11522433">
        <id>Q5JR59-3</id>
        <label>MTUS2</label>
    </interactant>
    <organismsDiffer>false</organismsDiffer>
    <experiments>3</experiments>
</comment>
<comment type="interaction">
    <interactant intactId="EBI-455078">
        <id>Q969G3</id>
    </interactant>
    <interactant intactId="EBI-945833">
        <id>Q7Z3S9</id>
        <label>NOTCH2NLA</label>
    </interactant>
    <organismsDiffer>false</organismsDiffer>
    <experiments>3</experiments>
</comment>
<comment type="interaction">
    <interactant intactId="EBI-455078">
        <id>Q969G3</id>
    </interactant>
    <interactant intactId="EBI-347978">
        <id>P37198</id>
        <label>NUP62</label>
    </interactant>
    <organismsDiffer>false</organismsDiffer>
    <experiments>3</experiments>
</comment>
<comment type="interaction">
    <interactant intactId="EBI-455078">
        <id>Q969G3</id>
    </interactant>
    <interactant intactId="EBI-536879">
        <id>O43482</id>
        <label>OIP5</label>
    </interactant>
    <organismsDiffer>false</organismsDiffer>
    <experiments>3</experiments>
</comment>
<comment type="interaction">
    <interactant intactId="EBI-455078">
        <id>Q969G3</id>
    </interactant>
    <interactant intactId="EBI-357669">
        <id>P62333</id>
        <label>PSMC6</label>
    </interactant>
    <organismsDiffer>false</organismsDiffer>
    <experiments>3</experiments>
</comment>
<comment type="interaction">
    <interactant intactId="EBI-455078">
        <id>Q969G3</id>
    </interactant>
    <interactant intactId="EBI-749285">
        <id>Q15311</id>
        <label>RALBP1</label>
    </interactant>
    <organismsDiffer>false</organismsDiffer>
    <experiments>6</experiments>
</comment>
<comment type="interaction">
    <interactant intactId="EBI-455078">
        <id>Q969G3</id>
    </interactant>
    <interactant intactId="EBI-726876">
        <id>Q6NUQ1</id>
        <label>RINT1</label>
    </interactant>
    <organismsDiffer>false</organismsDiffer>
    <experiments>3</experiments>
</comment>
<comment type="interaction">
    <interactant intactId="EBI-455078">
        <id>Q969G3</id>
    </interactant>
    <interactant intactId="EBI-413317">
        <id>Q96R06</id>
        <label>SPAG5</label>
    </interactant>
    <organismsDiffer>false</organismsDiffer>
    <experiments>3</experiments>
</comment>
<comment type="interaction">
    <interactant intactId="EBI-455078">
        <id>Q969G3</id>
    </interactant>
    <interactant intactId="EBI-714135">
        <id>O75558</id>
        <label>STX11</label>
    </interactant>
    <organismsDiffer>false</organismsDiffer>
    <experiments>3</experiments>
</comment>
<comment type="interaction">
    <interactant intactId="EBI-455078">
        <id>Q969G3</id>
    </interactant>
    <interactant intactId="EBI-6872807">
        <id>Q8N0S2</id>
        <label>SYCE1</label>
    </interactant>
    <organismsDiffer>false</organismsDiffer>
    <experiments>3</experiments>
</comment>
<comment type="interaction">
    <interactant intactId="EBI-455078">
        <id>Q969G3</id>
    </interactant>
    <interactant intactId="EBI-12090309">
        <id>Q9BXU0</id>
        <label>TEX12</label>
    </interactant>
    <organismsDiffer>false</organismsDiffer>
    <experiments>3</experiments>
</comment>
<comment type="interaction">
    <interactant intactId="EBI-455078">
        <id>Q969G3</id>
    </interactant>
    <interactant intactId="EBI-1105213">
        <id>Q9UBB9</id>
        <label>TFIP11</label>
    </interactant>
    <organismsDiffer>false</organismsDiffer>
    <experiments>7</experiments>
</comment>
<comment type="interaction">
    <interactant intactId="EBI-455078">
        <id>Q969G3</id>
    </interactant>
    <interactant intactId="EBI-2130429">
        <id>Q9BYV2</id>
        <label>TRIM54</label>
    </interactant>
    <organismsDiffer>false</organismsDiffer>
    <experiments>6</experiments>
</comment>
<comment type="interaction">
    <interactant intactId="EBI-455078">
        <id>Q969G3</id>
    </interactant>
    <interactant intactId="EBI-739936">
        <id>Q15642</id>
        <label>TRIP10</label>
    </interactant>
    <organismsDiffer>false</organismsDiffer>
    <experiments>3</experiments>
</comment>
<comment type="interaction">
    <interactant intactId="EBI-455078">
        <id>Q969G3</id>
    </interactant>
    <interactant intactId="EBI-6550597">
        <id>Q15642-2</id>
        <label>TRIP10</label>
    </interactant>
    <organismsDiffer>false</organismsDiffer>
    <experiments>6</experiments>
</comment>
<comment type="interaction">
    <interactant intactId="EBI-455078">
        <id>Q969G3</id>
    </interactant>
    <interactant intactId="EBI-359793">
        <id>P40222</id>
        <label>TXLNA</label>
    </interactant>
    <organismsDiffer>false</organismsDiffer>
    <experiments>3</experiments>
</comment>
<comment type="interaction">
    <interactant intactId="EBI-455078">
        <id>Q969G3</id>
    </interactant>
    <interactant intactId="EBI-739895">
        <id>Q8N6Y0</id>
        <label>USHBP1</label>
    </interactant>
    <organismsDiffer>false</organismsDiffer>
    <experiments>3</experiments>
</comment>
<comment type="interaction">
    <interactant intactId="EBI-455078">
        <id>Q969G3</id>
    </interactant>
    <interactant intactId="EBI-2799833">
        <id>Q8N1B4</id>
        <label>VPS52</label>
    </interactant>
    <organismsDiffer>false</organismsDiffer>
    <experiments>3</experiments>
</comment>
<comment type="interaction">
    <interactant intactId="EBI-455091">
        <id>Q969G3-1</id>
    </interactant>
    <interactant intactId="EBI-926563">
        <id>Q9UKL0</id>
        <label>RCOR1</label>
    </interactant>
    <organismsDiffer>false</organismsDiffer>
    <experiments>2</experiments>
</comment>
<comment type="interaction">
    <interactant intactId="EBI-455096">
        <id>Q969G3-2</id>
    </interactant>
    <interactant intactId="EBI-926563">
        <id>Q9UKL0</id>
        <label>RCOR1</label>
    </interactant>
    <organismsDiffer>false</organismsDiffer>
    <experiments>4</experiments>
</comment>
<comment type="interaction">
    <interactant intactId="EBI-455096">
        <id>Q969G3-2</id>
    </interactant>
    <interactant intactId="EBI-302489">
        <id>P51532</id>
        <label>SMARCA4</label>
    </interactant>
    <organismsDiffer>false</organismsDiffer>
    <experiments>2</experiments>
</comment>
<comment type="subcellular location">
    <subcellularLocation>
        <location evidence="4 6">Nucleus</location>
    </subcellularLocation>
</comment>
<comment type="alternative products">
    <event type="alternative splicing"/>
    <isoform>
        <id>Q969G3-1</id>
        <name>1</name>
        <name>BAF57</name>
        <sequence type="displayed"/>
    </isoform>
    <isoform>
        <id>Q969G3-2</id>
        <name>2</name>
        <name>BAF57v</name>
        <sequence type="described" ref="VSP_011801 VSP_011802"/>
    </isoform>
    <isoform>
        <id>Q969G3-3</id>
        <name>3</name>
        <sequence type="described" ref="VSP_047604"/>
    </isoform>
    <isoform>
        <id>Q969G3-4</id>
        <name>4</name>
        <sequence type="described" ref="VSP_047825"/>
    </isoform>
    <isoform>
        <id>Q969G3-5</id>
        <name>5</name>
        <sequence type="described" ref="VSP_047825 VSP_047826"/>
    </isoform>
    <isoform>
        <id>Q969G3-6</id>
        <name>6</name>
        <sequence type="described" ref="VSP_047604 VSP_047826"/>
    </isoform>
</comment>
<comment type="domain">
    <text>The HMG domain is essential for CD4 silencing and CD8 activation; mutation of this domain blocks thymus development.</text>
</comment>
<comment type="PTM">
    <text evidence="10">Ubiquitinated by TRIP12, leading to its degradation by the proteasome. Ubiquitination is prevented upon interaction between TRIP12 and SMARCC1.</text>
</comment>
<comment type="disease" evidence="12 14">
    <disease id="DI-04248">
        <name>Meningioma</name>
        <acronym>MNGMA</acronym>
        <description>A common neoplasm of the central nervous system derived from arachnoidal cells. The majority of meningiomas are well differentiated vascular tumors which grow slowly and have a low potential to be invasive, although malignant subtypes occur. Most cases are sporadic. Familial occurrence of meningioma is rare.</description>
        <dbReference type="MIM" id="607174"/>
    </disease>
    <text>Disease susceptibility is associated with variants affecting the gene represented in this entry.</text>
</comment>
<comment type="disease" evidence="11 13">
    <disease id="DI-04718">
        <name>Coffin-Siris syndrome 5</name>
        <acronym>CSS5</acronym>
        <description>A form of Coffin-Siris syndrome, a congenital multiple malformation syndrome with broad phenotypic and genetic variability. Cardinal features are intellectual disability, coarse facial features, hypertrichosis, and hypoplastic or absent fifth digit nails or phalanges. Additional features include malformations of the cardiac, gastrointestinal, genitourinary, and/or central nervous systems. Sucking/feeding difficulties, poor growth, ophthalmologic abnormalities, hearing impairment, and spinal anomalies are common findings. Both autosomal dominant and autosomal recessive inheritance patterns have been reported.</description>
        <dbReference type="MIM" id="616938"/>
    </disease>
    <text>The disease is caused by variants affecting the gene represented in this entry.</text>
</comment>
<sequence>MSKRPSYAPPPTPAPATQMPSTPGFVGYNPYSHLAYNNYRLGGNPGTNSRVTASSGITIPKPPKPPDKPLMPYMRYSRKVWDQVKASNPDLKLWEIGKIIGGMWRDLTDEEKQEYLNEYEAEKIEYNESMKAYHNSPAYLAYINAKSRAEAALEEESRQRQSRMEKGEPYMSIQPAEDPDDYDDGFSMKHTATARFQRNHRLISEILSESVVPDVRSVVTTARMQVLKRQVQSLMVHQRKLEAELLQIEERHQEKKRKFLESTDSFNNELKRLCGLKVEVDMEKIAAEIAQAEEQARKRQEEREKEAAEQAERSQSSIVPEEEQAANKGEEKKDDENIPMETEETHLEETTESQQNGEEGTSTPEDKESGQEGVDSMAEEGTSDSNTGSESNSATVEEPPTDPIPEDEKKE</sequence>
<proteinExistence type="evidence at protein level"/>
<accession>Q969G3</accession>
<accession>B3KMC1</accession>
<accession>B4DFR4</accession>
<accession>C0IMW4</accession>
<accession>C0IMW5</accession>
<accession>C0IMW7</accession>
<accession>H7C3F6</accession>
<accession>O43539</accession>
<protein>
    <recommendedName>
        <fullName>SWI/SNF-related matrix-associated actin-dependent regulator of chromatin subfamily E member 1</fullName>
    </recommendedName>
    <alternativeName>
        <fullName>BRG1-associated factor 57</fullName>
        <shortName>BAF57</shortName>
    </alternativeName>
</protein>
<gene>
    <name type="primary">SMARCE1</name>
    <name type="synonym">BAF57</name>
</gene>
<dbReference type="EMBL" id="AF035262">
    <property type="protein sequence ID" value="AAC04509.1"/>
    <property type="molecule type" value="Genomic_DNA"/>
</dbReference>
<dbReference type="EMBL" id="EU327017">
    <property type="protein sequence ID" value="ACA81391.1"/>
    <property type="molecule type" value="mRNA"/>
</dbReference>
<dbReference type="EMBL" id="EU327018">
    <property type="protein sequence ID" value="ACA81392.1"/>
    <property type="molecule type" value="mRNA"/>
</dbReference>
<dbReference type="EMBL" id="EU327019">
    <property type="protein sequence ID" value="ACA81393.1"/>
    <property type="molecule type" value="mRNA"/>
</dbReference>
<dbReference type="EMBL" id="EU327020">
    <property type="protein sequence ID" value="ACA81394.1"/>
    <property type="molecule type" value="mRNA"/>
</dbReference>
<dbReference type="EMBL" id="BT007176">
    <property type="protein sequence ID" value="AAP35840.1"/>
    <property type="molecule type" value="mRNA"/>
</dbReference>
<dbReference type="EMBL" id="AK001532">
    <property type="protein sequence ID" value="BAG50933.1"/>
    <property type="molecule type" value="mRNA"/>
</dbReference>
<dbReference type="EMBL" id="AK095047">
    <property type="protein sequence ID" value="BAG52975.1"/>
    <property type="molecule type" value="mRNA"/>
</dbReference>
<dbReference type="EMBL" id="AK294218">
    <property type="protein sequence ID" value="BAG57525.1"/>
    <property type="molecule type" value="mRNA"/>
</dbReference>
<dbReference type="EMBL" id="AC004585">
    <property type="status" value="NOT_ANNOTATED_CDS"/>
    <property type="molecule type" value="Genomic_DNA"/>
</dbReference>
<dbReference type="EMBL" id="AC073508">
    <property type="status" value="NOT_ANNOTATED_CDS"/>
    <property type="molecule type" value="Genomic_DNA"/>
</dbReference>
<dbReference type="EMBL" id="CH471152">
    <property type="protein sequence ID" value="EAW60670.1"/>
    <property type="molecule type" value="Genomic_DNA"/>
</dbReference>
<dbReference type="EMBL" id="BC007082">
    <property type="protein sequence ID" value="AAH07082.1"/>
    <property type="molecule type" value="mRNA"/>
</dbReference>
<dbReference type="EMBL" id="BC011017">
    <property type="protein sequence ID" value="AAH11017.1"/>
    <property type="molecule type" value="mRNA"/>
</dbReference>
<dbReference type="EMBL" id="BC063700">
    <property type="protein sequence ID" value="AAH63700.1"/>
    <property type="molecule type" value="mRNA"/>
</dbReference>
<dbReference type="CCDS" id="CCDS11370.1">
    <molecule id="Q969G3-1"/>
</dbReference>
<dbReference type="RefSeq" id="NP_003070.3">
    <molecule id="Q969G3-1"/>
    <property type="nucleotide sequence ID" value="NM_003079.4"/>
</dbReference>
<dbReference type="PDB" id="6LTH">
    <property type="method" value="EM"/>
    <property type="resolution" value="3.00 A"/>
    <property type="chains" value="Q=1-411"/>
</dbReference>
<dbReference type="PDB" id="6LTJ">
    <property type="method" value="EM"/>
    <property type="resolution" value="3.70 A"/>
    <property type="chains" value="Q=1-411"/>
</dbReference>
<dbReference type="PDB" id="7CYU">
    <property type="method" value="X-ray"/>
    <property type="resolution" value="2.55 A"/>
    <property type="chains" value="A=66-134"/>
</dbReference>
<dbReference type="PDB" id="7VDV">
    <property type="method" value="EM"/>
    <property type="resolution" value="3.40 A"/>
    <property type="chains" value="Z=1-411"/>
</dbReference>
<dbReference type="PDB" id="7Y8R">
    <property type="method" value="EM"/>
    <property type="resolution" value="4.40 A"/>
    <property type="chains" value="Q=1-411"/>
</dbReference>
<dbReference type="PDBsum" id="6LTH"/>
<dbReference type="PDBsum" id="6LTJ"/>
<dbReference type="PDBsum" id="7CYU"/>
<dbReference type="PDBsum" id="7VDV"/>
<dbReference type="PDBsum" id="7Y8R"/>
<dbReference type="EMDB" id="EMD-0974"/>
<dbReference type="EMDB" id="EMD-31926"/>
<dbReference type="EMDB" id="EMD-33684"/>
<dbReference type="SMR" id="Q969G3"/>
<dbReference type="BioGRID" id="112489">
    <property type="interactions" value="276"/>
</dbReference>
<dbReference type="ComplexPortal" id="CPX-1164">
    <property type="entry name" value="SWI/SNF ATP-dependent chromatin remodeling complex, ACTL6A-ARID1A-SMARCA2 variant"/>
</dbReference>
<dbReference type="ComplexPortal" id="CPX-1194">
    <property type="entry name" value="Muscle cell-specific SWI/SNF ATP-dependent chromatin remodeling complex, ACTL6A-ARID1A-SMARCA2 variant"/>
</dbReference>
<dbReference type="ComplexPortal" id="CPX-1195">
    <property type="entry name" value="Embryonic stem cell-specific SWI/SNF ATP-dependent chromatin remodeling complex"/>
</dbReference>
<dbReference type="ComplexPortal" id="CPX-1196">
    <property type="entry name" value="Polybromo-associated SWI/SNF ATP-dependent chromatin remodeling complex, ACTL6B variant"/>
</dbReference>
<dbReference type="ComplexPortal" id="CPX-1199">
    <property type="entry name" value="Polybromo-associated SWI/SNF ATP-dependent chromatin remodeling complex, ACTL6A variant"/>
</dbReference>
<dbReference type="ComplexPortal" id="CPX-1201">
    <property type="entry name" value="Neural progenitor-specific SWI/SNF ATP-dependent chromatin remodeling complex, ARID1A-SMARCA2 variant"/>
</dbReference>
<dbReference type="ComplexPortal" id="CPX-1202">
    <property type="entry name" value="Neuron-specific SWI/SNF ATP-dependent chromatin remodeling complex, ARID1A-SMARCA2 variant"/>
</dbReference>
<dbReference type="ComplexPortal" id="CPX-1203">
    <property type="entry name" value="Brain-specific SWI/SNF ATP-dependent chromatin remodeling complex, ARID1A-SMARCA2 variant"/>
</dbReference>
<dbReference type="ComplexPortal" id="CPX-1204">
    <property type="entry name" value="SWI/SNF ATP-dependent chromatin remodeling complex, ACTL6A-ARID1A-SMARCA4 variant"/>
</dbReference>
<dbReference type="ComplexPortal" id="CPX-1205">
    <property type="entry name" value="SWI/SNF ATP-dependent chromatin remodeling complex, ACTL6A-ARID1B-SMARCA2 variant"/>
</dbReference>
<dbReference type="ComplexPortal" id="CPX-1206">
    <property type="entry name" value="SWI/SNF ATP-dependent chromatin remodeling complex, ACTL6A-ARID1B-SMARCA4 variant"/>
</dbReference>
<dbReference type="ComplexPortal" id="CPX-1207">
    <property type="entry name" value="SWI/SNF ATP-dependent chromatin remodeling complex, ACTL6B-ARID1A-SMARCA2 variant"/>
</dbReference>
<dbReference type="ComplexPortal" id="CPX-1209">
    <property type="entry name" value="SWI/SNF ATP-dependent chromatin remodeling complex, ACTL6B-ARID1A-SMARCA4 variant"/>
</dbReference>
<dbReference type="ComplexPortal" id="CPX-1210">
    <property type="entry name" value="SWI/SNF ATP-dependent chromatin remodeling complex, ACTL6B-ARID1B-SMARCA2 variant"/>
</dbReference>
<dbReference type="ComplexPortal" id="CPX-1211">
    <property type="entry name" value="SWI/SNF ATP-dependent chromatin remodeling complex, ACTL6B-ARID1B-SMARCA4 variant"/>
</dbReference>
<dbReference type="ComplexPortal" id="CPX-1212">
    <property type="entry name" value="Neural progenitor-specific SWI/SNF ATP-dependent chromatin remodeling complex, ARID1A-SMARCA4 variant"/>
</dbReference>
<dbReference type="ComplexPortal" id="CPX-1213">
    <property type="entry name" value="Neural progenitor-specific SWI/SNF ATP-dependent chromatin remodeling complex, ARID1B-SMARCA2 variant"/>
</dbReference>
<dbReference type="ComplexPortal" id="CPX-1215">
    <property type="entry name" value="Neural progenitor-specific SWI/SNF ATP-dependent chromatin remodeling complex, ARID1B-SMARCA4 variant"/>
</dbReference>
<dbReference type="ComplexPortal" id="CPX-1216">
    <property type="entry name" value="Neuron-specific SWI/SNF ATP-dependent chromatin remodeling complex, ARID1A-SMARCA4 variant"/>
</dbReference>
<dbReference type="ComplexPortal" id="CPX-1217">
    <property type="entry name" value="Neuron-specific SWI/SNF ATP-dependent chromatin remodeling complex, ARID1B-SMARCA2 variant"/>
</dbReference>
<dbReference type="ComplexPortal" id="CPX-1218">
    <property type="entry name" value="Neuron-specific SWI/SNF ATP-dependent chromatin remodeling complex, ARID1B-SMARCA4 variant"/>
</dbReference>
<dbReference type="ComplexPortal" id="CPX-1219">
    <property type="entry name" value="Brain-specific SWI/SNF ATP-dependent chromatin remodeling complex, ARID1A-SMARCA4 variant"/>
</dbReference>
<dbReference type="ComplexPortal" id="CPX-1220">
    <property type="entry name" value="Brain-specific SWI/SNF ATP-dependent chromatin remodeling complex, ARID1B-SMARCA2 variant"/>
</dbReference>
<dbReference type="ComplexPortal" id="CPX-1221">
    <property type="entry name" value="Brain-specific SWI/SNF ATP-dependent chromatin remodeling complex, ARID1B-SMARCA4 variant"/>
</dbReference>
<dbReference type="ComplexPortal" id="CPX-1222">
    <property type="entry name" value="Muscle cell-specific SWI/SNF ATP-dependent chromatin remodeling complex, ACTL6A-ARID1A-SMARCA4 variant"/>
</dbReference>
<dbReference type="ComplexPortal" id="CPX-1223">
    <property type="entry name" value="Muscle cell-specific SWI/SNF ATP-dependent chromatin remodeling complex, ACTL6A-ARID1B-SMARCA2 variant"/>
</dbReference>
<dbReference type="ComplexPortal" id="CPX-1224">
    <property type="entry name" value="Muscle cell-specific SWI/SNF ATP-dependent chromatin remodeling complex, ACTL6A-ARID1B-SMARCA4 variant"/>
</dbReference>
<dbReference type="ComplexPortal" id="CPX-1225">
    <property type="entry name" value="Muscle cell-specific SWI/SNF ATP-dependent chromatin remodeling complex, ACTL6B-ARID1A-SMARCA2 variant"/>
</dbReference>
<dbReference type="ComplexPortal" id="CPX-1226">
    <property type="entry name" value="Muscle cell-specific SWI/SNF ATP-dependent chromatin remodeling complex, ACTL6B-ARID1A-SMARCA4 variant"/>
</dbReference>
<dbReference type="ComplexPortal" id="CPX-1227">
    <property type="entry name" value="Muscle cell-specific SWI/SNF ATP-dependent chromatin remodeling complex, ACTL6B-ARID1B-SMARCA2 variant"/>
</dbReference>
<dbReference type="ComplexPortal" id="CPX-1228">
    <property type="entry name" value="Muscle cell-specific SWI/SNF ATP-dependent chromatin remodeling complex, ACTL6B-ARID1B-SMARCA4 variant"/>
</dbReference>
<dbReference type="CORUM" id="Q969G3"/>
<dbReference type="DIP" id="DIP-27614N"/>
<dbReference type="DIP" id="DIP-33041N"/>
<dbReference type="FunCoup" id="Q969G3">
    <property type="interactions" value="2825"/>
</dbReference>
<dbReference type="IntAct" id="Q969G3">
    <property type="interactions" value="169"/>
</dbReference>
<dbReference type="MINT" id="Q969G3"/>
<dbReference type="STRING" id="9606.ENSP00000323967"/>
<dbReference type="DrugBank" id="DB12695">
    <property type="generic name" value="Phenethyl Isothiocyanate"/>
</dbReference>
<dbReference type="GlyGen" id="Q969G3">
    <property type="glycosylation" value="3 sites, 1 O-linked glycan (1 site)"/>
</dbReference>
<dbReference type="iPTMnet" id="Q969G3"/>
<dbReference type="PhosphoSitePlus" id="Q969G3"/>
<dbReference type="BioMuta" id="SMARCE1"/>
<dbReference type="DMDM" id="61247587"/>
<dbReference type="jPOST" id="Q969G3"/>
<dbReference type="MassIVE" id="Q969G3"/>
<dbReference type="PaxDb" id="9606-ENSP00000323967"/>
<dbReference type="PeptideAtlas" id="Q969G3"/>
<dbReference type="ProteomicsDB" id="4071"/>
<dbReference type="ProteomicsDB" id="45313"/>
<dbReference type="ProteomicsDB" id="7575"/>
<dbReference type="ProteomicsDB" id="75754">
    <molecule id="Q969G3-1"/>
</dbReference>
<dbReference type="ProteomicsDB" id="75755">
    <molecule id="Q969G3-2"/>
</dbReference>
<dbReference type="Pumba" id="Q969G3"/>
<dbReference type="ABCD" id="Q969G3">
    <property type="antibodies" value="1 sequenced antibody"/>
</dbReference>
<dbReference type="Antibodypedia" id="1299">
    <property type="antibodies" value="403 antibodies from 42 providers"/>
</dbReference>
<dbReference type="DNASU" id="6605"/>
<dbReference type="Ensembl" id="ENST00000264640.9">
    <molecule id="Q969G3-2"/>
    <property type="protein sequence ID" value="ENSP00000466608.2"/>
    <property type="gene ID" value="ENSG00000073584.20"/>
</dbReference>
<dbReference type="Ensembl" id="ENST00000348513.12">
    <molecule id="Q969G3-1"/>
    <property type="protein sequence ID" value="ENSP00000323967.6"/>
    <property type="gene ID" value="ENSG00000073584.20"/>
</dbReference>
<dbReference type="Ensembl" id="ENST00000377808.9">
    <molecule id="Q969G3-5"/>
    <property type="protein sequence ID" value="ENSP00000367039.4"/>
    <property type="gene ID" value="ENSG00000073584.20"/>
</dbReference>
<dbReference type="Ensembl" id="ENST00000400122.8">
    <molecule id="Q969G3-6"/>
    <property type="protein sequence ID" value="ENSP00000411607.2"/>
    <property type="gene ID" value="ENSG00000073584.20"/>
</dbReference>
<dbReference type="Ensembl" id="ENST00000447024.6">
    <molecule id="Q969G3-2"/>
    <property type="protein sequence ID" value="ENSP00000392958.2"/>
    <property type="gene ID" value="ENSG00000073584.20"/>
</dbReference>
<dbReference type="Ensembl" id="ENST00000578044.6">
    <molecule id="Q969G3-3"/>
    <property type="protein sequence ID" value="ENSP00000464511.1"/>
    <property type="gene ID" value="ENSG00000073584.20"/>
</dbReference>
<dbReference type="Ensembl" id="ENST00000643318.1">
    <molecule id="Q969G3-3"/>
    <property type="protein sequence ID" value="ENSP00000494771.1"/>
    <property type="gene ID" value="ENSG00000073584.20"/>
</dbReference>
<dbReference type="Ensembl" id="ENST00000643683.1">
    <molecule id="Q969G3-1"/>
    <property type="protein sequence ID" value="ENSP00000496094.1"/>
    <property type="gene ID" value="ENSG00000073584.20"/>
</dbReference>
<dbReference type="Ensembl" id="ENST00000644701.1">
    <molecule id="Q969G3-2"/>
    <property type="protein sequence ID" value="ENSP00000496097.1"/>
    <property type="gene ID" value="ENSG00000073584.20"/>
</dbReference>
<dbReference type="Ensembl" id="ENST00000647508.1">
    <molecule id="Q969G3-4"/>
    <property type="protein sequence ID" value="ENSP00000496445.1"/>
    <property type="gene ID" value="ENSG00000073584.20"/>
</dbReference>
<dbReference type="GeneID" id="6605"/>
<dbReference type="KEGG" id="hsa:6605"/>
<dbReference type="MANE-Select" id="ENST00000348513.12">
    <property type="protein sequence ID" value="ENSP00000323967.6"/>
    <property type="RefSeq nucleotide sequence ID" value="NM_003079.5"/>
    <property type="RefSeq protein sequence ID" value="NP_003070.3"/>
</dbReference>
<dbReference type="UCSC" id="uc002hux.4">
    <molecule id="Q969G3-1"/>
    <property type="organism name" value="human"/>
</dbReference>
<dbReference type="AGR" id="HGNC:11109"/>
<dbReference type="CTD" id="6605"/>
<dbReference type="DisGeNET" id="6605"/>
<dbReference type="GeneCards" id="SMARCE1"/>
<dbReference type="GeneReviews" id="SMARCE1"/>
<dbReference type="HGNC" id="HGNC:11109">
    <property type="gene designation" value="SMARCE1"/>
</dbReference>
<dbReference type="HPA" id="ENSG00000073584">
    <property type="expression patterns" value="Low tissue specificity"/>
</dbReference>
<dbReference type="MalaCards" id="SMARCE1"/>
<dbReference type="MIM" id="603111">
    <property type="type" value="gene"/>
</dbReference>
<dbReference type="MIM" id="607174">
    <property type="type" value="phenotype"/>
</dbReference>
<dbReference type="MIM" id="616938">
    <property type="type" value="phenotype"/>
</dbReference>
<dbReference type="neXtProt" id="NX_Q969G3"/>
<dbReference type="OpenTargets" id="ENSG00000073584"/>
<dbReference type="Orphanet" id="1465">
    <property type="disease" value="Coffin-Siris syndrome"/>
</dbReference>
<dbReference type="Orphanet" id="263662">
    <property type="disease" value="Familial multiple meningioma"/>
</dbReference>
<dbReference type="Orphanet" id="2495">
    <property type="disease" value="Meningioma"/>
</dbReference>
<dbReference type="PharmGKB" id="PA35959"/>
<dbReference type="VEuPathDB" id="HostDB:ENSG00000073584"/>
<dbReference type="eggNOG" id="KOG4715">
    <property type="taxonomic scope" value="Eukaryota"/>
</dbReference>
<dbReference type="GeneTree" id="ENSGT00390000003628"/>
<dbReference type="InParanoid" id="Q969G3"/>
<dbReference type="OMA" id="ISEIXSE"/>
<dbReference type="OrthoDB" id="30931at2759"/>
<dbReference type="PAN-GO" id="Q969G3">
    <property type="GO annotations" value="3 GO annotations based on evolutionary models"/>
</dbReference>
<dbReference type="PhylomeDB" id="Q969G3"/>
<dbReference type="TreeFam" id="TF321146"/>
<dbReference type="PathwayCommons" id="Q969G3"/>
<dbReference type="Reactome" id="R-HSA-3214858">
    <property type="pathway name" value="RMTs methylate histone arginines"/>
</dbReference>
<dbReference type="Reactome" id="R-HSA-8939243">
    <property type="pathway name" value="RUNX1 interacts with co-factors whose precise effect on RUNX1 targets is not known"/>
</dbReference>
<dbReference type="Reactome" id="R-HSA-9824585">
    <property type="pathway name" value="Regulation of MITF-M-dependent genes involved in pigmentation"/>
</dbReference>
<dbReference type="Reactome" id="R-HSA-9845323">
    <property type="pathway name" value="Regulation of endogenous retroelements by Piwi-interacting RNAs (piRNAs)"/>
</dbReference>
<dbReference type="SignaLink" id="Q969G3"/>
<dbReference type="SIGNOR" id="Q969G3"/>
<dbReference type="BioGRID-ORCS" id="6605">
    <property type="hits" value="536 hits in 1201 CRISPR screens"/>
</dbReference>
<dbReference type="CD-CODE" id="804901D1">
    <property type="entry name" value="Nuclear speckle"/>
</dbReference>
<dbReference type="ChiTaRS" id="SMARCE1">
    <property type="organism name" value="human"/>
</dbReference>
<dbReference type="GeneWiki" id="SMARCE1"/>
<dbReference type="GenomeRNAi" id="6605"/>
<dbReference type="Pharos" id="Q969G3">
    <property type="development level" value="Tbio"/>
</dbReference>
<dbReference type="PRO" id="PR:Q969G3"/>
<dbReference type="Proteomes" id="UP000005640">
    <property type="component" value="Chromosome 17"/>
</dbReference>
<dbReference type="RNAct" id="Q969G3">
    <property type="molecule type" value="protein"/>
</dbReference>
<dbReference type="Bgee" id="ENSG00000073584">
    <property type="expression patterns" value="Expressed in calcaneal tendon and 125 other cell types or tissues"/>
</dbReference>
<dbReference type="ExpressionAtlas" id="Q969G3">
    <property type="expression patterns" value="baseline and differential"/>
</dbReference>
<dbReference type="GO" id="GO:0140092">
    <property type="term" value="C:bBAF complex"/>
    <property type="evidence" value="ECO:0000303"/>
    <property type="project" value="ComplexPortal"/>
</dbReference>
<dbReference type="GO" id="GO:0035060">
    <property type="term" value="C:brahma complex"/>
    <property type="evidence" value="ECO:0000303"/>
    <property type="project" value="ComplexPortal"/>
</dbReference>
<dbReference type="GO" id="GO:0000785">
    <property type="term" value="C:chromatin"/>
    <property type="evidence" value="ECO:0007005"/>
    <property type="project" value="UniProtKB"/>
</dbReference>
<dbReference type="GO" id="GO:0000776">
    <property type="term" value="C:kinetochore"/>
    <property type="evidence" value="ECO:0000303"/>
    <property type="project" value="ComplexPortal"/>
</dbReference>
<dbReference type="GO" id="GO:0071565">
    <property type="term" value="C:nBAF complex"/>
    <property type="evidence" value="ECO:0000250"/>
    <property type="project" value="UniProtKB"/>
</dbReference>
<dbReference type="GO" id="GO:0071564">
    <property type="term" value="C:npBAF complex"/>
    <property type="evidence" value="ECO:0000250"/>
    <property type="project" value="UniProtKB"/>
</dbReference>
<dbReference type="GO" id="GO:0000228">
    <property type="term" value="C:nuclear chromosome"/>
    <property type="evidence" value="ECO:0000304"/>
    <property type="project" value="ProtInc"/>
</dbReference>
<dbReference type="GO" id="GO:0016363">
    <property type="term" value="C:nuclear matrix"/>
    <property type="evidence" value="ECO:0000303"/>
    <property type="project" value="ComplexPortal"/>
</dbReference>
<dbReference type="GO" id="GO:0005654">
    <property type="term" value="C:nucleoplasm"/>
    <property type="evidence" value="ECO:0000314"/>
    <property type="project" value="HPA"/>
</dbReference>
<dbReference type="GO" id="GO:0005634">
    <property type="term" value="C:nucleus"/>
    <property type="evidence" value="ECO:0000314"/>
    <property type="project" value="LIFEdb"/>
</dbReference>
<dbReference type="GO" id="GO:0032991">
    <property type="term" value="C:protein-containing complex"/>
    <property type="evidence" value="ECO:0007005"/>
    <property type="project" value="UniProtKB"/>
</dbReference>
<dbReference type="GO" id="GO:0016586">
    <property type="term" value="C:RSC-type complex"/>
    <property type="evidence" value="ECO:0000303"/>
    <property type="project" value="ComplexPortal"/>
</dbReference>
<dbReference type="GO" id="GO:0016514">
    <property type="term" value="C:SWI/SNF complex"/>
    <property type="evidence" value="ECO:0000314"/>
    <property type="project" value="UniProtKB"/>
</dbReference>
<dbReference type="GO" id="GO:0003682">
    <property type="term" value="F:chromatin binding"/>
    <property type="evidence" value="ECO:0000304"/>
    <property type="project" value="ProtInc"/>
</dbReference>
<dbReference type="GO" id="GO:0003677">
    <property type="term" value="F:DNA binding"/>
    <property type="evidence" value="ECO:0007669"/>
    <property type="project" value="UniProtKB-KW"/>
</dbReference>
<dbReference type="GO" id="GO:0008080">
    <property type="term" value="F:N-acetyltransferase activity"/>
    <property type="evidence" value="ECO:0000314"/>
    <property type="project" value="UniProtKB"/>
</dbReference>
<dbReference type="GO" id="GO:0016922">
    <property type="term" value="F:nuclear receptor binding"/>
    <property type="evidence" value="ECO:0000353"/>
    <property type="project" value="BHF-UCL"/>
</dbReference>
<dbReference type="GO" id="GO:0003723">
    <property type="term" value="F:RNA binding"/>
    <property type="evidence" value="ECO:0007669"/>
    <property type="project" value="Ensembl"/>
</dbReference>
<dbReference type="GO" id="GO:0003713">
    <property type="term" value="F:transcription coactivator activity"/>
    <property type="evidence" value="ECO:0000304"/>
    <property type="project" value="ProtInc"/>
</dbReference>
<dbReference type="GO" id="GO:0006338">
    <property type="term" value="P:chromatin remodeling"/>
    <property type="evidence" value="ECO:0000314"/>
    <property type="project" value="BHF-UCL"/>
</dbReference>
<dbReference type="GO" id="GO:0045892">
    <property type="term" value="P:negative regulation of DNA-templated transcription"/>
    <property type="evidence" value="ECO:0000314"/>
    <property type="project" value="UniProtKB"/>
</dbReference>
<dbReference type="GO" id="GO:0022008">
    <property type="term" value="P:neurogenesis"/>
    <property type="evidence" value="ECO:0007669"/>
    <property type="project" value="Ensembl"/>
</dbReference>
<dbReference type="GO" id="GO:0006337">
    <property type="term" value="P:nucleosome disassembly"/>
    <property type="evidence" value="ECO:0000314"/>
    <property type="project" value="BHF-UCL"/>
</dbReference>
<dbReference type="GO" id="GO:0045597">
    <property type="term" value="P:positive regulation of cell differentiation"/>
    <property type="evidence" value="ECO:0000303"/>
    <property type="project" value="ComplexPortal"/>
</dbReference>
<dbReference type="GO" id="GO:2000781">
    <property type="term" value="P:positive regulation of double-strand break repair"/>
    <property type="evidence" value="ECO:0000303"/>
    <property type="project" value="ComplexPortal"/>
</dbReference>
<dbReference type="GO" id="GO:0045663">
    <property type="term" value="P:positive regulation of myoblast differentiation"/>
    <property type="evidence" value="ECO:0000303"/>
    <property type="project" value="ComplexPortal"/>
</dbReference>
<dbReference type="GO" id="GO:1902459">
    <property type="term" value="P:positive regulation of stem cell population maintenance"/>
    <property type="evidence" value="ECO:0000303"/>
    <property type="project" value="ComplexPortal"/>
</dbReference>
<dbReference type="GO" id="GO:0045582">
    <property type="term" value="P:positive regulation of T cell differentiation"/>
    <property type="evidence" value="ECO:0000303"/>
    <property type="project" value="ComplexPortal"/>
</dbReference>
<dbReference type="GO" id="GO:0070316">
    <property type="term" value="P:regulation of G0 to G1 transition"/>
    <property type="evidence" value="ECO:0000303"/>
    <property type="project" value="ComplexPortal"/>
</dbReference>
<dbReference type="GO" id="GO:2000045">
    <property type="term" value="P:regulation of G1/S transition of mitotic cell cycle"/>
    <property type="evidence" value="ECO:0000303"/>
    <property type="project" value="ComplexPortal"/>
</dbReference>
<dbReference type="GO" id="GO:0030071">
    <property type="term" value="P:regulation of mitotic metaphase/anaphase transition"/>
    <property type="evidence" value="ECO:0000303"/>
    <property type="project" value="ComplexPortal"/>
</dbReference>
<dbReference type="GO" id="GO:2000819">
    <property type="term" value="P:regulation of nucleotide-excision repair"/>
    <property type="evidence" value="ECO:0000303"/>
    <property type="project" value="ComplexPortal"/>
</dbReference>
<dbReference type="GO" id="GO:0006357">
    <property type="term" value="P:regulation of transcription by RNA polymerase II"/>
    <property type="evidence" value="ECO:0000304"/>
    <property type="project" value="ProtInc"/>
</dbReference>
<dbReference type="CDD" id="cd21983">
    <property type="entry name" value="HMG-box_SMARCE1"/>
    <property type="match status" value="1"/>
</dbReference>
<dbReference type="FunFam" id="1.10.30.10:FF:000011">
    <property type="entry name" value="Putative SWI/SNF-related matrix-associated actin-dependent regulator of chromatin subfamily E member 1"/>
    <property type="match status" value="1"/>
</dbReference>
<dbReference type="Gene3D" id="1.10.30.10">
    <property type="entry name" value="High mobility group box domain"/>
    <property type="match status" value="1"/>
</dbReference>
<dbReference type="InterPro" id="IPR009071">
    <property type="entry name" value="HMG_box_dom"/>
</dbReference>
<dbReference type="InterPro" id="IPR036910">
    <property type="entry name" value="HMG_box_dom_sf"/>
</dbReference>
<dbReference type="PANTHER" id="PTHR46232">
    <property type="entry name" value="SMARCE1 REGULATOR OF CHROMATIN"/>
    <property type="match status" value="1"/>
</dbReference>
<dbReference type="PANTHER" id="PTHR46232:SF1">
    <property type="entry name" value="SWI_SNF-RELATED MATRIX-ASSOCIATED ACTIN-DEPENDENT REGULATOR OF CHROMATIN SUBFAMILY E MEMBER 1"/>
    <property type="match status" value="1"/>
</dbReference>
<dbReference type="Pfam" id="PF00505">
    <property type="entry name" value="HMG_box"/>
    <property type="match status" value="1"/>
</dbReference>
<dbReference type="SMART" id="SM00398">
    <property type="entry name" value="HMG"/>
    <property type="match status" value="1"/>
</dbReference>
<dbReference type="SUPFAM" id="SSF47095">
    <property type="entry name" value="HMG-box"/>
    <property type="match status" value="1"/>
</dbReference>
<dbReference type="PROSITE" id="PS50118">
    <property type="entry name" value="HMG_BOX_2"/>
    <property type="match status" value="1"/>
</dbReference>
<evidence type="ECO:0000250" key="1">
    <source>
        <dbReference type="UniProtKB" id="O54941"/>
    </source>
</evidence>
<evidence type="ECO:0000250" key="2">
    <source>
        <dbReference type="UniProtKB" id="Q56A18"/>
    </source>
</evidence>
<evidence type="ECO:0000255" key="3"/>
<evidence type="ECO:0000255" key="4">
    <source>
        <dbReference type="PROSITE-ProRule" id="PRU00267"/>
    </source>
</evidence>
<evidence type="ECO:0000256" key="5">
    <source>
        <dbReference type="SAM" id="MobiDB-lite"/>
    </source>
</evidence>
<evidence type="ECO:0000269" key="6">
    <source>
    </source>
</evidence>
<evidence type="ECO:0000269" key="7">
    <source>
    </source>
</evidence>
<evidence type="ECO:0000269" key="8">
    <source>
    </source>
</evidence>
<evidence type="ECO:0000269" key="9">
    <source>
    </source>
</evidence>
<evidence type="ECO:0000269" key="10">
    <source>
    </source>
</evidence>
<evidence type="ECO:0000269" key="11">
    <source>
    </source>
</evidence>
<evidence type="ECO:0000269" key="12">
    <source>
    </source>
</evidence>
<evidence type="ECO:0000269" key="13">
    <source>
    </source>
</evidence>
<evidence type="ECO:0000269" key="14">
    <source>
    </source>
</evidence>
<evidence type="ECO:0000303" key="15">
    <source>
    </source>
</evidence>
<evidence type="ECO:0000303" key="16">
    <source>
    </source>
</evidence>
<evidence type="ECO:0000303" key="17">
    <source>
    </source>
</evidence>
<evidence type="ECO:0000303" key="18">
    <source>
    </source>
</evidence>
<evidence type="ECO:0000303" key="19">
    <source ref="2"/>
</evidence>
<evidence type="ECO:0000305" key="20"/>
<evidence type="ECO:0007744" key="21">
    <source>
    </source>
</evidence>
<evidence type="ECO:0007744" key="22">
    <source>
    </source>
</evidence>
<evidence type="ECO:0007744" key="23">
    <source>
    </source>
</evidence>
<evidence type="ECO:0007744" key="24">
    <source>
    </source>
</evidence>
<evidence type="ECO:0007744" key="25">
    <source>
    </source>
</evidence>
<evidence type="ECO:0007744" key="26">
    <source>
    </source>
</evidence>
<evidence type="ECO:0007744" key="27">
    <source>
    </source>
</evidence>
<evidence type="ECO:0007829" key="28">
    <source>
        <dbReference type="PDB" id="6LTH"/>
    </source>
</evidence>
<evidence type="ECO:0007829" key="29">
    <source>
        <dbReference type="PDB" id="7CYU"/>
    </source>
</evidence>
<organism>
    <name type="scientific">Homo sapiens</name>
    <name type="common">Human</name>
    <dbReference type="NCBI Taxonomy" id="9606"/>
    <lineage>
        <taxon>Eukaryota</taxon>
        <taxon>Metazoa</taxon>
        <taxon>Chordata</taxon>
        <taxon>Craniata</taxon>
        <taxon>Vertebrata</taxon>
        <taxon>Euteleostomi</taxon>
        <taxon>Mammalia</taxon>
        <taxon>Eutheria</taxon>
        <taxon>Euarchontoglires</taxon>
        <taxon>Primates</taxon>
        <taxon>Haplorrhini</taxon>
        <taxon>Catarrhini</taxon>
        <taxon>Hominidae</taxon>
        <taxon>Homo</taxon>
    </lineage>
</organism>